<organism>
    <name type="scientific">Escherichia coli (strain K12)</name>
    <dbReference type="NCBI Taxonomy" id="83333"/>
    <lineage>
        <taxon>Bacteria</taxon>
        <taxon>Pseudomonadati</taxon>
        <taxon>Pseudomonadota</taxon>
        <taxon>Gammaproteobacteria</taxon>
        <taxon>Enterobacterales</taxon>
        <taxon>Enterobacteriaceae</taxon>
        <taxon>Escherichia</taxon>
    </lineage>
</organism>
<comment type="function">
    <text evidence="1">Binds to 23S rRNA. Forms part of two intersubunit bridges in the 70S ribosome.</text>
</comment>
<comment type="function">
    <text evidence="4 6">In the 3.5 A resolved structures L14 and L19 interact and together make contact with the 16S rRNA in bridges B5 and B8 (PubMed:12809609, PubMed:16272117).</text>
</comment>
<comment type="function">
    <text evidence="7 13">Can interact with RsfS, in this case bridge B8 probably cannot form, and the 30S and 50S ribosomal subunits do not associate, which represses translation (PubMed:22829778, PubMed:33639093).</text>
</comment>
<comment type="subunit">
    <text evidence="1 2 3 4 5 6 7 8 9 10 11 12 13 14 15">Part of the 50S ribosomal subunit (PubMed:10094780, PubMed:10756104, PubMed:12809609, PubMed:16272117, PubMed:24844575, PubMed:25310980, PubMed:2665813, PubMed:27906160, PubMed:27906161, PubMed:27934701, PubMed:352727, PubMed:7556101, PubMed:33639093). Forms a cluster with proteins L3 and L19 (PubMed:16272117, PubMed:2665813). Forms two bridges to the 30S subunit in the 70S ribosome, contacting the 16S rRNA. In pre-50S ribosomal subunits interacts with RsfS, which may inhibit association with the 30S subunit (PubMed:22829778, PubMed:33639093).</text>
</comment>
<comment type="mass spectrometry" mass="13540.2" method="MALDI" evidence="2"/>
<comment type="similarity">
    <text evidence="1">Belongs to the universal ribosomal protein uL14 family.</text>
</comment>
<accession>P0ADY3</accession>
<accession>P02411</accession>
<accession>Q2M6X5</accession>
<proteinExistence type="evidence at protein level"/>
<evidence type="ECO:0000255" key="1">
    <source>
        <dbReference type="HAMAP-Rule" id="MF_01367"/>
    </source>
</evidence>
<evidence type="ECO:0000269" key="2">
    <source>
    </source>
</evidence>
<evidence type="ECO:0000269" key="3">
    <source>
    </source>
</evidence>
<evidence type="ECO:0000269" key="4">
    <source>
    </source>
</evidence>
<evidence type="ECO:0000269" key="5">
    <source>
    </source>
</evidence>
<evidence type="ECO:0000269" key="6">
    <source>
    </source>
</evidence>
<evidence type="ECO:0000269" key="7">
    <source>
    </source>
</evidence>
<evidence type="ECO:0000269" key="8">
    <source>
    </source>
</evidence>
<evidence type="ECO:0000269" key="9">
    <source>
    </source>
</evidence>
<evidence type="ECO:0000269" key="10">
    <source>
    </source>
</evidence>
<evidence type="ECO:0000269" key="11">
    <source>
    </source>
</evidence>
<evidence type="ECO:0000269" key="12">
    <source>
    </source>
</evidence>
<evidence type="ECO:0000269" key="13">
    <source>
    </source>
</evidence>
<evidence type="ECO:0000269" key="14">
    <source>
    </source>
</evidence>
<evidence type="ECO:0000269" key="15">
    <source>
    </source>
</evidence>
<evidence type="ECO:0000303" key="16">
    <source>
    </source>
</evidence>
<evidence type="ECO:0000305" key="17"/>
<evidence type="ECO:0007744" key="18">
    <source>
        <dbReference type="PDB" id="7BL2"/>
    </source>
</evidence>
<evidence type="ECO:0007744" key="19">
    <source>
        <dbReference type="PDB" id="7BL3"/>
    </source>
</evidence>
<evidence type="ECO:0007744" key="20">
    <source>
        <dbReference type="PDB" id="7BL4"/>
    </source>
</evidence>
<evidence type="ECO:0007744" key="21">
    <source>
        <dbReference type="PDB" id="7BL5"/>
    </source>
</evidence>
<evidence type="ECO:0007829" key="22">
    <source>
        <dbReference type="PDB" id="6QUL"/>
    </source>
</evidence>
<evidence type="ECO:0007829" key="23">
    <source>
        <dbReference type="PDB" id="8AP4"/>
    </source>
</evidence>
<evidence type="ECO:0007829" key="24">
    <source>
        <dbReference type="PDB" id="8C90"/>
    </source>
</evidence>
<evidence type="ECO:0007829" key="25">
    <source>
        <dbReference type="PDB" id="8CEU"/>
    </source>
</evidence>
<evidence type="ECO:0007829" key="26">
    <source>
        <dbReference type="PDB" id="8CGK"/>
    </source>
</evidence>
<evidence type="ECO:0007829" key="27">
    <source>
        <dbReference type="PDB" id="8CGV"/>
    </source>
</evidence>
<name>RL14_ECOLI</name>
<sequence length="123" mass="13541">MIQEQTMLNVADNSGARRVMCIKVLGGSHRRYAGVGDIIKITIKEAIPRGKVKKGDVLKAVVVRTKKGVRRPDGSVIRFDGNACVLLNNNSEQPIGTRIFGPVTRELRSEKFMKIISLAPEVL</sequence>
<keyword id="KW-0002">3D-structure</keyword>
<keyword id="KW-0903">Direct protein sequencing</keyword>
<keyword id="KW-1185">Reference proteome</keyword>
<keyword id="KW-0687">Ribonucleoprotein</keyword>
<keyword id="KW-0689">Ribosomal protein</keyword>
<keyword id="KW-0694">RNA-binding</keyword>
<keyword id="KW-0699">rRNA-binding</keyword>
<gene>
    <name evidence="1" type="primary">rplN</name>
    <name type="ordered locus">b3310</name>
    <name type="ordered locus">JW3272</name>
</gene>
<reference key="1">
    <citation type="journal article" date="1978" name="FEBS Lett.">
        <title>Primary structure of protein L14 isolated from Escherichia coli ribosomes.</title>
        <authorList>
            <person name="Morinaga T."/>
            <person name="Funatsu G."/>
            <person name="Funatsu M."/>
            <person name="Wittmann-Liebold B."/>
            <person name="Wittmann H.G."/>
        </authorList>
    </citation>
    <scope>PROTEIN SEQUENCE</scope>
    <scope>SUBUNIT</scope>
    <source>
        <strain>K</strain>
    </source>
</reference>
<reference key="2">
    <citation type="journal article" date="1983" name="Nucleic Acids Res.">
        <title>The spc ribosomal protein operon of Escherichia coli: sequence and cotranscription of the ribosomal protein genes and a protein export gene.</title>
        <authorList>
            <person name="Cerretti D.P."/>
            <person name="Dean D."/>
            <person name="Davis G.R."/>
            <person name="Bedwell D.M."/>
            <person name="Nomura M."/>
        </authorList>
    </citation>
    <scope>NUCLEOTIDE SEQUENCE [GENOMIC DNA]</scope>
    <source>
        <strain>K12</strain>
    </source>
</reference>
<reference key="3">
    <citation type="journal article" date="1997" name="Science">
        <title>The complete genome sequence of Escherichia coli K-12.</title>
        <authorList>
            <person name="Blattner F.R."/>
            <person name="Plunkett G. III"/>
            <person name="Bloch C.A."/>
            <person name="Perna N.T."/>
            <person name="Burland V."/>
            <person name="Riley M."/>
            <person name="Collado-Vides J."/>
            <person name="Glasner J.D."/>
            <person name="Rode C.K."/>
            <person name="Mayhew G.F."/>
            <person name="Gregor J."/>
            <person name="Davis N.W."/>
            <person name="Kirkpatrick H.A."/>
            <person name="Goeden M.A."/>
            <person name="Rose D.J."/>
            <person name="Mau B."/>
            <person name="Shao Y."/>
        </authorList>
    </citation>
    <scope>NUCLEOTIDE SEQUENCE [LARGE SCALE GENOMIC DNA]</scope>
    <source>
        <strain>K12 / MG1655 / ATCC 47076</strain>
    </source>
</reference>
<reference key="4">
    <citation type="journal article" date="2006" name="Mol. Syst. Biol.">
        <title>Highly accurate genome sequences of Escherichia coli K-12 strains MG1655 and W3110.</title>
        <authorList>
            <person name="Hayashi K."/>
            <person name="Morooka N."/>
            <person name="Yamamoto Y."/>
            <person name="Fujita K."/>
            <person name="Isono K."/>
            <person name="Choi S."/>
            <person name="Ohtsubo E."/>
            <person name="Baba T."/>
            <person name="Wanner B.L."/>
            <person name="Mori H."/>
            <person name="Horiuchi T."/>
        </authorList>
    </citation>
    <scope>NUCLEOTIDE SEQUENCE [LARGE SCALE GENOMIC DNA]</scope>
    <source>
        <strain>K12 / W3110 / ATCC 27325 / DSM 5911</strain>
    </source>
</reference>
<reference key="5">
    <citation type="journal article" date="1978" name="Cell">
        <title>DNA sequences of promoter regions for the str and spc ribosomal protein operons in E. coli.</title>
        <authorList>
            <person name="Post L.E."/>
            <person name="Arfsten A.E."/>
            <person name="Reusser F."/>
            <person name="Nomura M."/>
        </authorList>
    </citation>
    <scope>NUCLEOTIDE SEQUENCE [GENOMIC DNA] OF 1-20</scope>
    <source>
        <strain>K12</strain>
    </source>
</reference>
<reference key="6">
    <citation type="journal article" date="1995" name="EMBO J.">
        <title>Protein-rRNA binding features and their structural and functional implications in ribosomes as determined by cross-linking studies.</title>
        <authorList>
            <person name="Urlaub H."/>
            <person name="Kruft V."/>
            <person name="Bischof O."/>
            <person name="Mueller E.-C."/>
            <person name="Wittmann-Liebold B."/>
        </authorList>
    </citation>
    <scope>PROTEIN SEQUENCE OF 24-28</scope>
    <scope>SUBUNIT</scope>
    <scope>CROSS-LINKING TO RRNA</scope>
    <source>
        <strain>MRE-600</strain>
    </source>
</reference>
<reference key="7">
    <citation type="journal article" date="1989" name="Biochemistry">
        <title>Comparative cross-linking study on the 50S ribosomal subunit from Escherichia coli.</title>
        <authorList>
            <person name="Walleczek J."/>
            <person name="Martin T."/>
            <person name="Redl B."/>
            <person name="Stoeffler-Meilicke M."/>
            <person name="Stoeffler G."/>
        </authorList>
    </citation>
    <scope>CROSS-LINKING TO L19</scope>
    <scope>SUBUNIT</scope>
</reference>
<reference key="8">
    <citation type="journal article" date="1999" name="Anal. Biochem.">
        <title>Observation of Escherichia coli ribosomal proteins and their posttranslational modifications by mass spectrometry.</title>
        <authorList>
            <person name="Arnold R.J."/>
            <person name="Reilly J.P."/>
        </authorList>
    </citation>
    <scope>MASS SPECTROMETRY</scope>
    <scope>SUBUNIT</scope>
    <source>
        <strain>K12 / ATCC 25404 / DSM 5698 / NCIMB 11290</strain>
    </source>
</reference>
<reference key="9">
    <citation type="journal article" date="2012" name="PLoS Genet.">
        <title>RsfA (YbeB) proteins are conserved ribosomal silencing factors.</title>
        <authorList>
            <person name="Hauser R."/>
            <person name="Pech M."/>
            <person name="Kijek J."/>
            <person name="Yamamoto H."/>
            <person name="Titz B."/>
            <person name="Naeve F."/>
            <person name="Tovchigrechko A."/>
            <person name="Yamamoto K."/>
            <person name="Szaflarski W."/>
            <person name="Takeuchi N."/>
            <person name="Stellberger T."/>
            <person name="Diefenbacher M.E."/>
            <person name="Nierhaus K.H."/>
            <person name="Uetz P."/>
        </authorList>
    </citation>
    <scope>FUNCTION</scope>
    <scope>INTERACTION WITH RSFS</scope>
    <scope>MUTAGENESIS OF THR-97; ARG-98; LYS-114 AND SER-117</scope>
    <source>
        <strain>K12 / MG1655 / ATCC 47076</strain>
    </source>
</reference>
<reference key="10">
    <citation type="journal article" date="2014" name="Curr. Opin. Struct. Biol.">
        <title>A new system for naming ribosomal proteins.</title>
        <authorList>
            <person name="Ban N."/>
            <person name="Beckmann R."/>
            <person name="Cate J.H.D."/>
            <person name="Dinman J.D."/>
            <person name="Dragon F."/>
            <person name="Ellis S.R."/>
            <person name="Lafontaine D.L.J."/>
            <person name="Lindahl L."/>
            <person name="Liljas A."/>
            <person name="Lipton J.M."/>
            <person name="McAlear M.A."/>
            <person name="Moore P.B."/>
            <person name="Noller H.F."/>
            <person name="Ortega J."/>
            <person name="Panse V.G."/>
            <person name="Ramakrishnan V."/>
            <person name="Spahn C.M.T."/>
            <person name="Steitz T.A."/>
            <person name="Tchorzewski M."/>
            <person name="Tollervey D."/>
            <person name="Warren A.J."/>
            <person name="Williamson J.R."/>
            <person name="Wilson D."/>
            <person name="Yonath A."/>
            <person name="Yusupov M."/>
        </authorList>
    </citation>
    <scope>NOMENCLATURE</scope>
</reference>
<reference key="11">
    <citation type="journal article" date="2000" name="J. Mol. Biol.">
        <title>The 3D arrangement of the 23 S and 5 S rRNA in the Escherichia coli 50 S ribosomal subunit based on a cryo-electron microscopic reconstruction at 7.5 A resolution.</title>
        <authorList>
            <person name="Mueller F."/>
            <person name="Sommer I."/>
            <person name="Baranov P."/>
            <person name="Matadeen R."/>
            <person name="Stoldt M."/>
            <person name="Woehnert J."/>
            <person name="Goerlach M."/>
            <person name="van Heel M."/>
            <person name="Brimacombe R."/>
        </authorList>
    </citation>
    <scope>3D-STRUCTURE MODELING</scope>
    <scope>SUBUNIT</scope>
</reference>
<reference key="12">
    <citation type="journal article" date="2003" name="Cell">
        <title>Study of the structural dynamics of the E. coli 70S ribosome using real-space refinement.</title>
        <authorList>
            <person name="Gao H."/>
            <person name="Sengupta J."/>
            <person name="Valle M."/>
            <person name="Korostelev A."/>
            <person name="Eswar N."/>
            <person name="Stagg S.M."/>
            <person name="Van Roey P."/>
            <person name="Agrawal R.K."/>
            <person name="Harvey S.C."/>
            <person name="Sali A."/>
            <person name="Chapman M.S."/>
            <person name="Frank J."/>
        </authorList>
    </citation>
    <scope>STRUCTURE BY ELECTRON MICROSCOPY (11.50 ANGSTROMS)</scope>
    <scope>SUBUNIT</scope>
    <scope>INTERSUBUNIT BRIDGE FORMATION</scope>
</reference>
<reference key="13">
    <citation type="journal article" date="2005" name="Science">
        <title>Structures of the bacterial ribosome at 3.5 A resolution.</title>
        <authorList>
            <person name="Schuwirth B.S."/>
            <person name="Borovinskaya M.A."/>
            <person name="Hau C.W."/>
            <person name="Zhang W."/>
            <person name="Vila-Sanjurjo A."/>
            <person name="Holton J.M."/>
            <person name="Cate J.H.D."/>
        </authorList>
    </citation>
    <scope>X-RAY CRYSTALLOGRAPHY (3.46 ANGSTROMS) OF 2 DIFFERENT RIBOSOME STRUCTURES</scope>
    <scope>SUBUNIT</scope>
    <source>
        <strain>MRE-600</strain>
    </source>
</reference>
<reference key="14">
    <citation type="journal article" date="2014" name="Cell Rep.">
        <title>Molecular basis for the ribosome functioning as an L-tryptophan sensor.</title>
        <authorList>
            <person name="Bischoff L."/>
            <person name="Berninghausen O."/>
            <person name="Beckmann R."/>
        </authorList>
    </citation>
    <scope>STRUCTURE BY ELECTRON MICROSCOPY (3.80 ANGSTROMS) OF 1-122 IN TNAC-STALLED 50S RIBOSOMAL SUBUNIT</scope>
    <scope>SUBUNIT</scope>
    <source>
        <strain>K12 / A19 / KC6</strain>
    </source>
</reference>
<reference key="15">
    <citation type="journal article" date="2014" name="PLoS Biol.">
        <title>Structural and functional insights into the mode of action of a universally conserved Obg GTPase.</title>
        <authorList>
            <person name="Feng B."/>
            <person name="Mandava C.S."/>
            <person name="Guo Q."/>
            <person name="Wang J."/>
            <person name="Cao W."/>
            <person name="Li N."/>
            <person name="Zhang Y."/>
            <person name="Zhang Y."/>
            <person name="Wang Z."/>
            <person name="Wu J."/>
            <person name="Sanyal S."/>
            <person name="Lei J."/>
            <person name="Gao N."/>
        </authorList>
    </citation>
    <scope>STRUCTURE BY ELECTRON MICROSCOPY (5.5 ANGSTROMS) OF 50S RIBOSOMAL SUBUNIT IN COMPLEX WITH OBGE AND GMP-PNP</scope>
    <scope>SUBUNIT</scope>
</reference>
<reference key="16">
    <citation type="journal article" date="2017" name="Nature">
        <title>Mechanistic insights into the alternative translation termination by ArfA and RF2.</title>
        <authorList>
            <person name="Ma C."/>
            <person name="Kurita D."/>
            <person name="Li N."/>
            <person name="Chen Y."/>
            <person name="Himeno H."/>
            <person name="Gao N."/>
        </authorList>
    </citation>
    <scope>STRUCTURE BY ELECTRON MICROSCOPY (3.0 ANGSTROMS) OF 70S RIBOSOME IN COMPLEX WITH ARFA AND RF2</scope>
    <scope>SUBUNIT</scope>
</reference>
<reference key="17">
    <citation type="journal article" date="2017" name="Nature">
        <title>Structural basis for ArfA-RF2-mediated translation termination on mRNAs lacking stop codons.</title>
        <authorList>
            <person name="Huter P."/>
            <person name="Mueller C."/>
            <person name="Beckert B."/>
            <person name="Arenz S."/>
            <person name="Berninghausen O."/>
            <person name="Beckmann R."/>
            <person name="Wilson D.N."/>
        </authorList>
    </citation>
    <scope>STRUCTURE BY ELECTRON MICROSCOPY (3.1 ANGSTROMS) OF 70S RIBOSOME IN COMPLEX WITH ARFA AND RF2</scope>
    <scope>SUBUNIT</scope>
</reference>
<reference key="18">
    <citation type="journal article" date="2016" name="Science">
        <title>Translational termination without a stop codon.</title>
        <authorList>
            <person name="James N.R."/>
            <person name="Brown A."/>
            <person name="Gordiyenko Y."/>
            <person name="Ramakrishnan V."/>
        </authorList>
    </citation>
    <scope>STRUCTURE BY ELECTRON MICROSCOPY (2.97 ANGSTROMS) OF 70S RIBOSOME IN COMPLEX WITH ARFA AND RF2</scope>
    <scope>SUBUNIT</scope>
</reference>
<reference key="19">
    <citation type="journal article" date="2017" name="Nature">
        <title>Structural basis of co-translational quality control by ArfA and RF2 bound to ribosome.</title>
        <authorList>
            <person name="Zeng F."/>
            <person name="Chen Y."/>
            <person name="Remis J."/>
            <person name="Shekhar M."/>
            <person name="Phillips J.C."/>
            <person name="Tajkhorshid E."/>
            <person name="Jin H."/>
        </authorList>
    </citation>
    <scope>STRUCTURE BY ELECTRON MICROSCOPY (3.52 ANGSTROMS) OF 70S RIBOSOME IN COMPLEX WITH ARFA AND RF2</scope>
    <scope>SUBUNIT</scope>
</reference>
<reference evidence="18 19 20 21" key="20">
    <citation type="journal article" date="2021" name="Mol. Cell">
        <title>Snapshots of native pre-50S ribosomes reveal a biogenesis factor network and evolutionary specialization.</title>
        <authorList>
            <person name="Nikolay R."/>
            <person name="Hilal T."/>
            <person name="Schmidt S."/>
            <person name="Qin B."/>
            <person name="Schwefel D."/>
            <person name="Vieira-Vieira C.H."/>
            <person name="Mielke T."/>
            <person name="Burger J."/>
            <person name="Loerke J."/>
            <person name="Amikura K."/>
            <person name="Flugel T."/>
            <person name="Ueda T."/>
            <person name="Selbach M."/>
            <person name="Deuerling E."/>
            <person name="Spahn C.M.T."/>
        </authorList>
    </citation>
    <scope>STRUCTURE BY ELECTRON MICROSCOPY (2.40 ANGSTROMS) IN ASSOCIATION WITH PRE-50S RIBOSOMAL SUBUNIT</scope>
    <scope>FUNCTION IN 50S RIBOSOMAL SUBUNIT BIOGENESIS</scope>
    <scope>SUBUNIT</scope>
    <source>
        <strain>K12 / MG1655 / ATCC 47076</strain>
    </source>
</reference>
<protein>
    <recommendedName>
        <fullName evidence="1 16">Large ribosomal subunit protein uL14</fullName>
    </recommendedName>
    <alternativeName>
        <fullName>50S ribosomal protein L14</fullName>
    </alternativeName>
</protein>
<dbReference type="EMBL" id="X01563">
    <property type="protein sequence ID" value="CAA25715.1"/>
    <property type="molecule type" value="Genomic_DNA"/>
</dbReference>
<dbReference type="EMBL" id="U18997">
    <property type="protein sequence ID" value="AAA58107.1"/>
    <property type="molecule type" value="Genomic_DNA"/>
</dbReference>
<dbReference type="EMBL" id="U00096">
    <property type="protein sequence ID" value="AAC76335.1"/>
    <property type="molecule type" value="Genomic_DNA"/>
</dbReference>
<dbReference type="EMBL" id="AP009048">
    <property type="protein sequence ID" value="BAE77981.1"/>
    <property type="molecule type" value="Genomic_DNA"/>
</dbReference>
<dbReference type="EMBL" id="V00357">
    <property type="protein sequence ID" value="CAA23653.1"/>
    <property type="molecule type" value="Genomic_DNA"/>
</dbReference>
<dbReference type="PIR" id="A65124">
    <property type="entry name" value="R5EC14"/>
</dbReference>
<dbReference type="RefSeq" id="NP_417769.1">
    <property type="nucleotide sequence ID" value="NC_000913.3"/>
</dbReference>
<dbReference type="RefSeq" id="WP_000613955.1">
    <property type="nucleotide sequence ID" value="NZ_STEB01000038.1"/>
</dbReference>
<dbReference type="PDB" id="1ML5">
    <property type="method" value="EM"/>
    <property type="resolution" value="14.00 A"/>
    <property type="chains" value="n=1-122"/>
</dbReference>
<dbReference type="PDB" id="2J28">
    <property type="method" value="EM"/>
    <property type="resolution" value="8.00 A"/>
    <property type="chains" value="K=2-122"/>
</dbReference>
<dbReference type="PDB" id="2RDO">
    <property type="method" value="EM"/>
    <property type="resolution" value="9.10 A"/>
    <property type="chains" value="K=1-123"/>
</dbReference>
<dbReference type="PDB" id="3BBX">
    <property type="method" value="EM"/>
    <property type="resolution" value="10.00 A"/>
    <property type="chains" value="K=1-123"/>
</dbReference>
<dbReference type="PDB" id="3IY9">
    <property type="method" value="EM"/>
    <property type="resolution" value="14.10 A"/>
    <property type="chains" value="K=2-122"/>
</dbReference>
<dbReference type="PDB" id="3IZZ">
    <property type="method" value="EM"/>
    <property type="resolution" value="10.80 A"/>
    <property type="chains" value="G=2-122"/>
</dbReference>
<dbReference type="PDB" id="3J5L">
    <property type="method" value="EM"/>
    <property type="resolution" value="6.60 A"/>
    <property type="chains" value="K=1-122"/>
</dbReference>
<dbReference type="PDB" id="3J7Z">
    <property type="method" value="EM"/>
    <property type="resolution" value="3.90 A"/>
    <property type="chains" value="K=1-123"/>
</dbReference>
<dbReference type="PDB" id="3J8G">
    <property type="method" value="EM"/>
    <property type="resolution" value="5.00 A"/>
    <property type="chains" value="K=1-123"/>
</dbReference>
<dbReference type="PDB" id="3J9Y">
    <property type="method" value="EM"/>
    <property type="resolution" value="3.90 A"/>
    <property type="chains" value="K=1-123"/>
</dbReference>
<dbReference type="PDB" id="3J9Z">
    <property type="method" value="EM"/>
    <property type="resolution" value="3.60 A"/>
    <property type="chains" value="LG=1-123"/>
</dbReference>
<dbReference type="PDB" id="3JA1">
    <property type="method" value="EM"/>
    <property type="resolution" value="3.60 A"/>
    <property type="chains" value="LM=1-123"/>
</dbReference>
<dbReference type="PDB" id="3JBU">
    <property type="method" value="EM"/>
    <property type="resolution" value="3.64 A"/>
    <property type="chains" value="k=1-123"/>
</dbReference>
<dbReference type="PDB" id="3JBV">
    <property type="method" value="EM"/>
    <property type="resolution" value="3.32 A"/>
    <property type="chains" value="k=1-123"/>
</dbReference>
<dbReference type="PDB" id="3JCD">
    <property type="method" value="EM"/>
    <property type="resolution" value="3.70 A"/>
    <property type="chains" value="K=1-123"/>
</dbReference>
<dbReference type="PDB" id="3JCE">
    <property type="method" value="EM"/>
    <property type="resolution" value="3.20 A"/>
    <property type="chains" value="K=1-123"/>
</dbReference>
<dbReference type="PDB" id="3JCJ">
    <property type="method" value="EM"/>
    <property type="resolution" value="3.70 A"/>
    <property type="chains" value="J=1-123"/>
</dbReference>
<dbReference type="PDB" id="3JCN">
    <property type="method" value="EM"/>
    <property type="resolution" value="4.60 A"/>
    <property type="chains" value="K=1-123"/>
</dbReference>
<dbReference type="PDB" id="487D">
    <property type="method" value="EM"/>
    <property type="resolution" value="7.50 A"/>
    <property type="chains" value="M=1-122"/>
</dbReference>
<dbReference type="PDB" id="4CSU">
    <property type="method" value="EM"/>
    <property type="resolution" value="5.50 A"/>
    <property type="chains" value="K=1-123"/>
</dbReference>
<dbReference type="PDB" id="4U1U">
    <property type="method" value="X-ray"/>
    <property type="resolution" value="2.95 A"/>
    <property type="chains" value="BK/DK=1-122"/>
</dbReference>
<dbReference type="PDB" id="4U1V">
    <property type="method" value="X-ray"/>
    <property type="resolution" value="3.00 A"/>
    <property type="chains" value="BK/DK=1-122"/>
</dbReference>
<dbReference type="PDB" id="4U20">
    <property type="method" value="X-ray"/>
    <property type="resolution" value="2.90 A"/>
    <property type="chains" value="BK/DK=1-122"/>
</dbReference>
<dbReference type="PDB" id="4U24">
    <property type="method" value="X-ray"/>
    <property type="resolution" value="2.90 A"/>
    <property type="chains" value="BK/DK=1-122"/>
</dbReference>
<dbReference type="PDB" id="4U25">
    <property type="method" value="X-ray"/>
    <property type="resolution" value="2.90 A"/>
    <property type="chains" value="BK/DK=1-122"/>
</dbReference>
<dbReference type="PDB" id="4U26">
    <property type="method" value="X-ray"/>
    <property type="resolution" value="2.80 A"/>
    <property type="chains" value="BK/DK=1-122"/>
</dbReference>
<dbReference type="PDB" id="4U27">
    <property type="method" value="X-ray"/>
    <property type="resolution" value="2.80 A"/>
    <property type="chains" value="BK/DK=1-122"/>
</dbReference>
<dbReference type="PDB" id="4UY8">
    <property type="method" value="EM"/>
    <property type="resolution" value="3.80 A"/>
    <property type="chains" value="K=1-122"/>
</dbReference>
<dbReference type="PDB" id="4V47">
    <property type="method" value="EM"/>
    <property type="resolution" value="12.30 A"/>
    <property type="chains" value="AI=1-123"/>
</dbReference>
<dbReference type="PDB" id="4V48">
    <property type="method" value="EM"/>
    <property type="resolution" value="11.50 A"/>
    <property type="chains" value="AI=1-123"/>
</dbReference>
<dbReference type="PDB" id="4V4H">
    <property type="method" value="X-ray"/>
    <property type="resolution" value="3.46 A"/>
    <property type="chains" value="BK/DK=1-123"/>
</dbReference>
<dbReference type="PDB" id="4V4Q">
    <property type="method" value="X-ray"/>
    <property type="resolution" value="3.46 A"/>
    <property type="chains" value="BK/DK=1-123"/>
</dbReference>
<dbReference type="PDB" id="4V4V">
    <property type="method" value="EM"/>
    <property type="resolution" value="15.00 A"/>
    <property type="chains" value="BI=2-123"/>
</dbReference>
<dbReference type="PDB" id="4V4W">
    <property type="method" value="EM"/>
    <property type="resolution" value="15.00 A"/>
    <property type="chains" value="BI=2-123"/>
</dbReference>
<dbReference type="PDB" id="4V50">
    <property type="method" value="X-ray"/>
    <property type="resolution" value="3.22 A"/>
    <property type="chains" value="BK/DK=1-123"/>
</dbReference>
<dbReference type="PDB" id="4V52">
    <property type="method" value="X-ray"/>
    <property type="resolution" value="3.21 A"/>
    <property type="chains" value="BK/DK=1-123"/>
</dbReference>
<dbReference type="PDB" id="4V53">
    <property type="method" value="X-ray"/>
    <property type="resolution" value="3.54 A"/>
    <property type="chains" value="BK/DK=1-123"/>
</dbReference>
<dbReference type="PDB" id="4V54">
    <property type="method" value="X-ray"/>
    <property type="resolution" value="3.30 A"/>
    <property type="chains" value="BK/DK=1-123"/>
</dbReference>
<dbReference type="PDB" id="4V55">
    <property type="method" value="X-ray"/>
    <property type="resolution" value="4.00 A"/>
    <property type="chains" value="BK/DK=1-123"/>
</dbReference>
<dbReference type="PDB" id="4V56">
    <property type="method" value="X-ray"/>
    <property type="resolution" value="3.93 A"/>
    <property type="chains" value="BK/DK=1-123"/>
</dbReference>
<dbReference type="PDB" id="4V57">
    <property type="method" value="X-ray"/>
    <property type="resolution" value="3.50 A"/>
    <property type="chains" value="BK/DK=1-123"/>
</dbReference>
<dbReference type="PDB" id="4V5B">
    <property type="method" value="X-ray"/>
    <property type="resolution" value="3.74 A"/>
    <property type="chains" value="AK/CK=1-123"/>
</dbReference>
<dbReference type="PDB" id="4V5H">
    <property type="method" value="EM"/>
    <property type="resolution" value="5.80 A"/>
    <property type="chains" value="BK=1-121"/>
</dbReference>
<dbReference type="PDB" id="4V5Y">
    <property type="method" value="X-ray"/>
    <property type="resolution" value="4.45 A"/>
    <property type="chains" value="BK/DK=1-123"/>
</dbReference>
<dbReference type="PDB" id="4V64">
    <property type="method" value="X-ray"/>
    <property type="resolution" value="3.50 A"/>
    <property type="chains" value="BK/DK=1-123"/>
</dbReference>
<dbReference type="PDB" id="4V65">
    <property type="method" value="EM"/>
    <property type="resolution" value="9.00 A"/>
    <property type="chains" value="BD=1-123"/>
</dbReference>
<dbReference type="PDB" id="4V66">
    <property type="method" value="EM"/>
    <property type="resolution" value="9.00 A"/>
    <property type="chains" value="BD=1-123"/>
</dbReference>
<dbReference type="PDB" id="4V69">
    <property type="method" value="EM"/>
    <property type="resolution" value="6.70 A"/>
    <property type="chains" value="BK=2-122"/>
</dbReference>
<dbReference type="PDB" id="4V6C">
    <property type="method" value="X-ray"/>
    <property type="resolution" value="3.19 A"/>
    <property type="chains" value="BK/DK=1-123"/>
</dbReference>
<dbReference type="PDB" id="4V6D">
    <property type="method" value="X-ray"/>
    <property type="resolution" value="3.81 A"/>
    <property type="chains" value="BK/DK=1-123"/>
</dbReference>
<dbReference type="PDB" id="4V6E">
    <property type="method" value="X-ray"/>
    <property type="resolution" value="3.71 A"/>
    <property type="chains" value="BK/DK=1-123"/>
</dbReference>
<dbReference type="PDB" id="4V6K">
    <property type="method" value="EM"/>
    <property type="resolution" value="8.25 A"/>
    <property type="chains" value="AL=1-123"/>
</dbReference>
<dbReference type="PDB" id="4V6L">
    <property type="method" value="EM"/>
    <property type="resolution" value="13.20 A"/>
    <property type="chains" value="BL=1-123"/>
</dbReference>
<dbReference type="PDB" id="4V6M">
    <property type="method" value="EM"/>
    <property type="resolution" value="7.10 A"/>
    <property type="chains" value="BK=1-123"/>
</dbReference>
<dbReference type="PDB" id="4V6N">
    <property type="method" value="EM"/>
    <property type="resolution" value="12.10 A"/>
    <property type="chains" value="AM=1-123"/>
</dbReference>
<dbReference type="PDB" id="4V6O">
    <property type="method" value="EM"/>
    <property type="resolution" value="14.70 A"/>
    <property type="chains" value="BM=1-123"/>
</dbReference>
<dbReference type="PDB" id="4V6P">
    <property type="method" value="EM"/>
    <property type="resolution" value="13.50 A"/>
    <property type="chains" value="BM=1-123"/>
</dbReference>
<dbReference type="PDB" id="4V6Q">
    <property type="method" value="EM"/>
    <property type="resolution" value="11.50 A"/>
    <property type="chains" value="BM=1-123"/>
</dbReference>
<dbReference type="PDB" id="4V6R">
    <property type="method" value="EM"/>
    <property type="resolution" value="11.50 A"/>
    <property type="chains" value="BM=1-123"/>
</dbReference>
<dbReference type="PDB" id="4V6S">
    <property type="method" value="EM"/>
    <property type="resolution" value="13.10 A"/>
    <property type="chains" value="AM=1-123"/>
</dbReference>
<dbReference type="PDB" id="4V6T">
    <property type="method" value="EM"/>
    <property type="resolution" value="8.30 A"/>
    <property type="chains" value="BK=1-122"/>
</dbReference>
<dbReference type="PDB" id="4V6V">
    <property type="method" value="EM"/>
    <property type="resolution" value="9.80 A"/>
    <property type="chains" value="BO=1-123"/>
</dbReference>
<dbReference type="PDB" id="4V6Y">
    <property type="method" value="EM"/>
    <property type="resolution" value="12.00 A"/>
    <property type="chains" value="BK=1-122"/>
</dbReference>
<dbReference type="PDB" id="4V6Z">
    <property type="method" value="EM"/>
    <property type="resolution" value="12.00 A"/>
    <property type="chains" value="BK=1-122"/>
</dbReference>
<dbReference type="PDB" id="4V70">
    <property type="method" value="EM"/>
    <property type="resolution" value="17.00 A"/>
    <property type="chains" value="BK=1-122"/>
</dbReference>
<dbReference type="PDB" id="4V71">
    <property type="method" value="EM"/>
    <property type="resolution" value="20.00 A"/>
    <property type="chains" value="BK=1-122"/>
</dbReference>
<dbReference type="PDB" id="4V72">
    <property type="method" value="EM"/>
    <property type="resolution" value="13.00 A"/>
    <property type="chains" value="BK=1-122"/>
</dbReference>
<dbReference type="PDB" id="4V73">
    <property type="method" value="EM"/>
    <property type="resolution" value="15.00 A"/>
    <property type="chains" value="BK=1-122"/>
</dbReference>
<dbReference type="PDB" id="4V74">
    <property type="method" value="EM"/>
    <property type="resolution" value="17.00 A"/>
    <property type="chains" value="BK=1-122"/>
</dbReference>
<dbReference type="PDB" id="4V75">
    <property type="method" value="EM"/>
    <property type="resolution" value="12.00 A"/>
    <property type="chains" value="BK=1-122"/>
</dbReference>
<dbReference type="PDB" id="4V76">
    <property type="method" value="EM"/>
    <property type="resolution" value="17.00 A"/>
    <property type="chains" value="BK=1-122"/>
</dbReference>
<dbReference type="PDB" id="4V77">
    <property type="method" value="EM"/>
    <property type="resolution" value="17.00 A"/>
    <property type="chains" value="BK=1-122"/>
</dbReference>
<dbReference type="PDB" id="4V78">
    <property type="method" value="EM"/>
    <property type="resolution" value="20.00 A"/>
    <property type="chains" value="BK=1-122"/>
</dbReference>
<dbReference type="PDB" id="4V79">
    <property type="method" value="EM"/>
    <property type="resolution" value="15.00 A"/>
    <property type="chains" value="BK=1-122"/>
</dbReference>
<dbReference type="PDB" id="4V7A">
    <property type="method" value="EM"/>
    <property type="resolution" value="9.00 A"/>
    <property type="chains" value="BK=1-122"/>
</dbReference>
<dbReference type="PDB" id="4V7B">
    <property type="method" value="EM"/>
    <property type="resolution" value="6.80 A"/>
    <property type="chains" value="BK=1-123"/>
</dbReference>
<dbReference type="PDB" id="4V7C">
    <property type="method" value="EM"/>
    <property type="resolution" value="7.60 A"/>
    <property type="chains" value="BM=1-123"/>
</dbReference>
<dbReference type="PDB" id="4V7D">
    <property type="method" value="EM"/>
    <property type="resolution" value="7.60 A"/>
    <property type="chains" value="AN=1-123"/>
</dbReference>
<dbReference type="PDB" id="4V7I">
    <property type="method" value="EM"/>
    <property type="resolution" value="9.60 A"/>
    <property type="chains" value="AK=1-123"/>
</dbReference>
<dbReference type="PDB" id="4V7S">
    <property type="method" value="X-ray"/>
    <property type="resolution" value="3.25 A"/>
    <property type="chains" value="BK/DK=1-122"/>
</dbReference>
<dbReference type="PDB" id="4V7T">
    <property type="method" value="X-ray"/>
    <property type="resolution" value="3.19 A"/>
    <property type="chains" value="BK/DK=1-122"/>
</dbReference>
<dbReference type="PDB" id="4V7U">
    <property type="method" value="X-ray"/>
    <property type="resolution" value="3.10 A"/>
    <property type="chains" value="BK/DK=1-122"/>
</dbReference>
<dbReference type="PDB" id="4V7V">
    <property type="method" value="X-ray"/>
    <property type="resolution" value="3.29 A"/>
    <property type="chains" value="BK/DK=1-122"/>
</dbReference>
<dbReference type="PDB" id="4V85">
    <property type="method" value="X-ray"/>
    <property type="resolution" value="3.20 A"/>
    <property type="chains" value="BO=1-123"/>
</dbReference>
<dbReference type="PDB" id="4V89">
    <property type="method" value="X-ray"/>
    <property type="resolution" value="3.70 A"/>
    <property type="chains" value="BO=1-123"/>
</dbReference>
<dbReference type="PDB" id="4V9C">
    <property type="method" value="X-ray"/>
    <property type="resolution" value="3.30 A"/>
    <property type="chains" value="BK/DK=1-123"/>
</dbReference>
<dbReference type="PDB" id="4V9D">
    <property type="method" value="X-ray"/>
    <property type="resolution" value="3.00 A"/>
    <property type="chains" value="CK/DK=1-122"/>
</dbReference>
<dbReference type="PDB" id="4V9O">
    <property type="method" value="X-ray"/>
    <property type="resolution" value="2.90 A"/>
    <property type="chains" value="AK/CK/EK/GK=1-123"/>
</dbReference>
<dbReference type="PDB" id="4V9P">
    <property type="method" value="X-ray"/>
    <property type="resolution" value="2.90 A"/>
    <property type="chains" value="AK/CK/EK/GK=1-123"/>
</dbReference>
<dbReference type="PDB" id="4WF1">
    <property type="method" value="X-ray"/>
    <property type="resolution" value="3.09 A"/>
    <property type="chains" value="BK/DK=1-122"/>
</dbReference>
<dbReference type="PDB" id="4WOI">
    <property type="method" value="X-ray"/>
    <property type="resolution" value="3.00 A"/>
    <property type="chains" value="BK/CK=1-123"/>
</dbReference>
<dbReference type="PDB" id="4WWW">
    <property type="method" value="X-ray"/>
    <property type="resolution" value="3.10 A"/>
    <property type="chains" value="RK/YK=1-122"/>
</dbReference>
<dbReference type="PDB" id="4YBB">
    <property type="method" value="X-ray"/>
    <property type="resolution" value="2.10 A"/>
    <property type="chains" value="CL/DL=1-123"/>
</dbReference>
<dbReference type="PDB" id="5ADY">
    <property type="method" value="EM"/>
    <property type="resolution" value="4.50 A"/>
    <property type="chains" value="K=1-123"/>
</dbReference>
<dbReference type="PDB" id="5AFI">
    <property type="method" value="EM"/>
    <property type="resolution" value="2.90 A"/>
    <property type="chains" value="K=1-123"/>
</dbReference>
<dbReference type="PDB" id="5AKA">
    <property type="method" value="EM"/>
    <property type="resolution" value="5.70 A"/>
    <property type="chains" value="K=1-123"/>
</dbReference>
<dbReference type="PDB" id="5GAD">
    <property type="method" value="EM"/>
    <property type="resolution" value="3.70 A"/>
    <property type="chains" value="L=1-123"/>
</dbReference>
<dbReference type="PDB" id="5GAE">
    <property type="method" value="EM"/>
    <property type="resolution" value="3.33 A"/>
    <property type="chains" value="L=1-123"/>
</dbReference>
<dbReference type="PDB" id="5GAF">
    <property type="method" value="EM"/>
    <property type="resolution" value="4.30 A"/>
    <property type="chains" value="L=1-123"/>
</dbReference>
<dbReference type="PDB" id="5GAG">
    <property type="method" value="EM"/>
    <property type="resolution" value="3.80 A"/>
    <property type="chains" value="L=1-123"/>
</dbReference>
<dbReference type="PDB" id="5GAH">
    <property type="method" value="EM"/>
    <property type="resolution" value="3.80 A"/>
    <property type="chains" value="L=1-123"/>
</dbReference>
<dbReference type="PDB" id="5H5U">
    <property type="method" value="EM"/>
    <property type="resolution" value="3.00 A"/>
    <property type="chains" value="L=1-123"/>
</dbReference>
<dbReference type="PDB" id="5IQR">
    <property type="method" value="EM"/>
    <property type="resolution" value="3.00 A"/>
    <property type="chains" value="K=1-123"/>
</dbReference>
<dbReference type="PDB" id="5IT8">
    <property type="method" value="X-ray"/>
    <property type="resolution" value="3.12 A"/>
    <property type="chains" value="CL/DL=1-123"/>
</dbReference>
<dbReference type="PDB" id="5J5B">
    <property type="method" value="X-ray"/>
    <property type="resolution" value="2.80 A"/>
    <property type="chains" value="CL/DL=1-123"/>
</dbReference>
<dbReference type="PDB" id="5J7L">
    <property type="method" value="X-ray"/>
    <property type="resolution" value="3.00 A"/>
    <property type="chains" value="CL/DL=1-123"/>
</dbReference>
<dbReference type="PDB" id="5J88">
    <property type="method" value="X-ray"/>
    <property type="resolution" value="3.32 A"/>
    <property type="chains" value="CL/DL=1-123"/>
</dbReference>
<dbReference type="PDB" id="5J8A">
    <property type="method" value="X-ray"/>
    <property type="resolution" value="3.10 A"/>
    <property type="chains" value="CL/DL=1-123"/>
</dbReference>
<dbReference type="PDB" id="5J91">
    <property type="method" value="X-ray"/>
    <property type="resolution" value="2.96 A"/>
    <property type="chains" value="CL/DL=1-123"/>
</dbReference>
<dbReference type="PDB" id="5JC9">
    <property type="method" value="X-ray"/>
    <property type="resolution" value="3.03 A"/>
    <property type="chains" value="CL/DL=1-123"/>
</dbReference>
<dbReference type="PDB" id="5JTE">
    <property type="method" value="EM"/>
    <property type="resolution" value="3.60 A"/>
    <property type="chains" value="BK=1-123"/>
</dbReference>
<dbReference type="PDB" id="5JU8">
    <property type="method" value="EM"/>
    <property type="resolution" value="3.60 A"/>
    <property type="chains" value="BK=1-123"/>
</dbReference>
<dbReference type="PDB" id="5KCR">
    <property type="method" value="EM"/>
    <property type="resolution" value="3.60 A"/>
    <property type="chains" value="1O=1-123"/>
</dbReference>
<dbReference type="PDB" id="5KCS">
    <property type="method" value="EM"/>
    <property type="resolution" value="3.90 A"/>
    <property type="chains" value="1O=1-123"/>
</dbReference>
<dbReference type="PDB" id="5KPS">
    <property type="method" value="EM"/>
    <property type="resolution" value="3.90 A"/>
    <property type="chains" value="K=1-123"/>
</dbReference>
<dbReference type="PDB" id="5KPV">
    <property type="method" value="EM"/>
    <property type="resolution" value="4.10 A"/>
    <property type="chains" value="J=1-123"/>
</dbReference>
<dbReference type="PDB" id="5KPW">
    <property type="method" value="EM"/>
    <property type="resolution" value="3.90 A"/>
    <property type="chains" value="J=1-123"/>
</dbReference>
<dbReference type="PDB" id="5KPX">
    <property type="method" value="EM"/>
    <property type="resolution" value="3.90 A"/>
    <property type="chains" value="J=1-123"/>
</dbReference>
<dbReference type="PDB" id="5L3P">
    <property type="method" value="EM"/>
    <property type="resolution" value="3.70 A"/>
    <property type="chains" value="O=1-123"/>
</dbReference>
<dbReference type="PDB" id="5LZA">
    <property type="method" value="EM"/>
    <property type="resolution" value="3.60 A"/>
    <property type="chains" value="K=1-122"/>
</dbReference>
<dbReference type="PDB" id="5LZB">
    <property type="method" value="EM"/>
    <property type="resolution" value="5.30 A"/>
    <property type="chains" value="K=1-122"/>
</dbReference>
<dbReference type="PDB" id="5LZC">
    <property type="method" value="EM"/>
    <property type="resolution" value="4.80 A"/>
    <property type="chains" value="K=1-122"/>
</dbReference>
<dbReference type="PDB" id="5LZD">
    <property type="method" value="EM"/>
    <property type="resolution" value="3.40 A"/>
    <property type="chains" value="K=1-122"/>
</dbReference>
<dbReference type="PDB" id="5LZE">
    <property type="method" value="EM"/>
    <property type="resolution" value="3.50 A"/>
    <property type="chains" value="K=1-122"/>
</dbReference>
<dbReference type="PDB" id="5LZF">
    <property type="method" value="EM"/>
    <property type="resolution" value="4.60 A"/>
    <property type="chains" value="K=1-122"/>
</dbReference>
<dbReference type="PDB" id="5MDV">
    <property type="method" value="EM"/>
    <property type="resolution" value="2.97 A"/>
    <property type="chains" value="K=1-123"/>
</dbReference>
<dbReference type="PDB" id="5MDW">
    <property type="method" value="EM"/>
    <property type="resolution" value="3.06 A"/>
    <property type="chains" value="K=1-123"/>
</dbReference>
<dbReference type="PDB" id="5MDY">
    <property type="method" value="EM"/>
    <property type="resolution" value="3.35 A"/>
    <property type="chains" value="K=1-123"/>
</dbReference>
<dbReference type="PDB" id="5MDZ">
    <property type="method" value="EM"/>
    <property type="resolution" value="3.10 A"/>
    <property type="chains" value="K=1-123"/>
</dbReference>
<dbReference type="PDB" id="5MGP">
    <property type="method" value="EM"/>
    <property type="resolution" value="3.10 A"/>
    <property type="chains" value="K=1-122"/>
</dbReference>
<dbReference type="PDB" id="5NCO">
    <property type="method" value="EM"/>
    <property type="resolution" value="4.80 A"/>
    <property type="chains" value="L=1-123"/>
</dbReference>
<dbReference type="PDB" id="5NP6">
    <property type="method" value="EM"/>
    <property type="resolution" value="3.60 A"/>
    <property type="chains" value="i=1-122"/>
</dbReference>
<dbReference type="PDB" id="5NWY">
    <property type="method" value="EM"/>
    <property type="resolution" value="2.93 A"/>
    <property type="chains" value="X=1-123"/>
</dbReference>
<dbReference type="PDB" id="5O2R">
    <property type="method" value="EM"/>
    <property type="resolution" value="3.40 A"/>
    <property type="chains" value="K=1-122"/>
</dbReference>
<dbReference type="PDB" id="5U4I">
    <property type="method" value="EM"/>
    <property type="resolution" value="3.50 A"/>
    <property type="chains" value="L=1-123"/>
</dbReference>
<dbReference type="PDB" id="5U9F">
    <property type="method" value="EM"/>
    <property type="resolution" value="3.20 A"/>
    <property type="chains" value="13=1-123"/>
</dbReference>
<dbReference type="PDB" id="5U9G">
    <property type="method" value="EM"/>
    <property type="resolution" value="3.20 A"/>
    <property type="chains" value="13=1-123"/>
</dbReference>
<dbReference type="PDB" id="5UYK">
    <property type="method" value="EM"/>
    <property type="resolution" value="3.90 A"/>
    <property type="chains" value="13=1-122"/>
</dbReference>
<dbReference type="PDB" id="5UYL">
    <property type="method" value="EM"/>
    <property type="resolution" value="3.60 A"/>
    <property type="chains" value="13=1-122"/>
</dbReference>
<dbReference type="PDB" id="5UYM">
    <property type="method" value="EM"/>
    <property type="resolution" value="3.20 A"/>
    <property type="chains" value="13=1-122"/>
</dbReference>
<dbReference type="PDB" id="5UYN">
    <property type="method" value="EM"/>
    <property type="resolution" value="4.00 A"/>
    <property type="chains" value="13=1-122"/>
</dbReference>
<dbReference type="PDB" id="5UYP">
    <property type="method" value="EM"/>
    <property type="resolution" value="3.90 A"/>
    <property type="chains" value="13=1-122"/>
</dbReference>
<dbReference type="PDB" id="5UYQ">
    <property type="method" value="EM"/>
    <property type="resolution" value="3.80 A"/>
    <property type="chains" value="13=1-122"/>
</dbReference>
<dbReference type="PDB" id="5WDT">
    <property type="method" value="EM"/>
    <property type="resolution" value="3.00 A"/>
    <property type="chains" value="K=1-122"/>
</dbReference>
<dbReference type="PDB" id="5WE4">
    <property type="method" value="EM"/>
    <property type="resolution" value="3.10 A"/>
    <property type="chains" value="K=1-122"/>
</dbReference>
<dbReference type="PDB" id="5WE6">
    <property type="method" value="EM"/>
    <property type="resolution" value="3.40 A"/>
    <property type="chains" value="K=1-122"/>
</dbReference>
<dbReference type="PDB" id="5WF0">
    <property type="method" value="EM"/>
    <property type="resolution" value="3.60 A"/>
    <property type="chains" value="K=1-122"/>
</dbReference>
<dbReference type="PDB" id="5WFK">
    <property type="method" value="EM"/>
    <property type="resolution" value="3.40 A"/>
    <property type="chains" value="K=1-122"/>
</dbReference>
<dbReference type="PDB" id="5WFS">
    <property type="method" value="EM"/>
    <property type="resolution" value="3.00 A"/>
    <property type="chains" value="K=1-122"/>
</dbReference>
<dbReference type="PDB" id="6BU8">
    <property type="method" value="EM"/>
    <property type="resolution" value="3.50 A"/>
    <property type="chains" value="13=1-122"/>
</dbReference>
<dbReference type="PDB" id="6BY1">
    <property type="method" value="X-ray"/>
    <property type="resolution" value="3.94 A"/>
    <property type="chains" value="CK/DK=1-122"/>
</dbReference>
<dbReference type="PDB" id="6C4I">
    <property type="method" value="EM"/>
    <property type="resolution" value="3.24 A"/>
    <property type="chains" value="L=1-123"/>
</dbReference>
<dbReference type="PDB" id="6DNC">
    <property type="method" value="EM"/>
    <property type="resolution" value="3.70 A"/>
    <property type="chains" value="O=1-123"/>
</dbReference>
<dbReference type="PDB" id="6ENF">
    <property type="method" value="EM"/>
    <property type="resolution" value="3.20 A"/>
    <property type="chains" value="K=1-122"/>
</dbReference>
<dbReference type="PDB" id="6ENJ">
    <property type="method" value="EM"/>
    <property type="resolution" value="3.70 A"/>
    <property type="chains" value="K=1-122"/>
</dbReference>
<dbReference type="PDB" id="6ENU">
    <property type="method" value="EM"/>
    <property type="resolution" value="3.10 A"/>
    <property type="chains" value="K=1-122"/>
</dbReference>
<dbReference type="PDB" id="6GBZ">
    <property type="method" value="EM"/>
    <property type="resolution" value="3.80 A"/>
    <property type="chains" value="K=1-122"/>
</dbReference>
<dbReference type="PDB" id="6GC0">
    <property type="method" value="EM"/>
    <property type="resolution" value="3.80 A"/>
    <property type="chains" value="K=1-122"/>
</dbReference>
<dbReference type="PDB" id="6GC4">
    <property type="method" value="EM"/>
    <property type="resolution" value="4.30 A"/>
    <property type="chains" value="K=1-122"/>
</dbReference>
<dbReference type="PDB" id="6GC6">
    <property type="method" value="EM"/>
    <property type="resolution" value="4.30 A"/>
    <property type="chains" value="K=1-122"/>
</dbReference>
<dbReference type="PDB" id="6GC7">
    <property type="method" value="EM"/>
    <property type="resolution" value="4.30 A"/>
    <property type="chains" value="K=1-122"/>
</dbReference>
<dbReference type="PDB" id="6GC8">
    <property type="method" value="EM"/>
    <property type="resolution" value="3.80 A"/>
    <property type="chains" value="K=1-122"/>
</dbReference>
<dbReference type="PDB" id="6GWT">
    <property type="method" value="EM"/>
    <property type="resolution" value="3.80 A"/>
    <property type="chains" value="K=1-122"/>
</dbReference>
<dbReference type="PDB" id="6GXM">
    <property type="method" value="EM"/>
    <property type="resolution" value="3.80 A"/>
    <property type="chains" value="K=1-122"/>
</dbReference>
<dbReference type="PDB" id="6GXN">
    <property type="method" value="EM"/>
    <property type="resolution" value="3.90 A"/>
    <property type="chains" value="K=1-122"/>
</dbReference>
<dbReference type="PDB" id="6GXO">
    <property type="method" value="EM"/>
    <property type="resolution" value="3.90 A"/>
    <property type="chains" value="K=1-122"/>
</dbReference>
<dbReference type="PDB" id="6GXP">
    <property type="method" value="EM"/>
    <property type="resolution" value="4.40 A"/>
    <property type="chains" value="K=1-122"/>
</dbReference>
<dbReference type="PDB" id="6H4N">
    <property type="method" value="EM"/>
    <property type="resolution" value="3.00 A"/>
    <property type="chains" value="K=1-122"/>
</dbReference>
<dbReference type="PDB" id="6H58">
    <property type="method" value="EM"/>
    <property type="resolution" value="7.90 A"/>
    <property type="chains" value="K/KK=1-122"/>
</dbReference>
<dbReference type="PDB" id="6HRM">
    <property type="method" value="EM"/>
    <property type="resolution" value="2.96 A"/>
    <property type="chains" value="K=1-123"/>
</dbReference>
<dbReference type="PDB" id="6I0Y">
    <property type="method" value="EM"/>
    <property type="resolution" value="3.20 A"/>
    <property type="chains" value="K=1-122"/>
</dbReference>
<dbReference type="PDB" id="6I7V">
    <property type="method" value="X-ray"/>
    <property type="resolution" value="2.90 A"/>
    <property type="chains" value="CL/DL=1-123"/>
</dbReference>
<dbReference type="PDB" id="6O9J">
    <property type="method" value="EM"/>
    <property type="resolution" value="3.90 A"/>
    <property type="chains" value="K=2-122"/>
</dbReference>
<dbReference type="PDB" id="6O9K">
    <property type="method" value="EM"/>
    <property type="resolution" value="4.00 A"/>
    <property type="chains" value="K=1-122"/>
</dbReference>
<dbReference type="PDB" id="6OFX">
    <property type="method" value="EM"/>
    <property type="resolution" value="3.30 A"/>
    <property type="chains" value="k=1-122"/>
</dbReference>
<dbReference type="PDB" id="6OG7">
    <property type="method" value="EM"/>
    <property type="resolution" value="3.30 A"/>
    <property type="chains" value="k=1-122"/>
</dbReference>
<dbReference type="PDB" id="6OGF">
    <property type="method" value="EM"/>
    <property type="resolution" value="3.90 A"/>
    <property type="chains" value="k=1-123"/>
</dbReference>
<dbReference type="PDB" id="6OGG">
    <property type="method" value="EM"/>
    <property type="resolution" value="4.20 A"/>
    <property type="chains" value="k=1-123"/>
</dbReference>
<dbReference type="PDB" id="6OGI">
    <property type="method" value="EM"/>
    <property type="resolution" value="3.40 A"/>
    <property type="chains" value="k=1-123"/>
</dbReference>
<dbReference type="PDB" id="6OM6">
    <property type="method" value="EM"/>
    <property type="resolution" value="3.10 A"/>
    <property type="chains" value="K=1-123"/>
</dbReference>
<dbReference type="PDB" id="6ORE">
    <property type="method" value="EM"/>
    <property type="resolution" value="2.90 A"/>
    <property type="chains" value="K=1-123"/>
</dbReference>
<dbReference type="PDB" id="6ORL">
    <property type="method" value="EM"/>
    <property type="resolution" value="3.50 A"/>
    <property type="chains" value="K=1-123"/>
</dbReference>
<dbReference type="PDB" id="6OSK">
    <property type="method" value="EM"/>
    <property type="resolution" value="3.60 A"/>
    <property type="chains" value="K=1-123"/>
</dbReference>
<dbReference type="PDB" id="6OSQ">
    <property type="method" value="EM"/>
    <property type="resolution" value="3.50 A"/>
    <property type="chains" value="K=1-123"/>
</dbReference>
<dbReference type="PDB" id="6OST">
    <property type="method" value="EM"/>
    <property type="resolution" value="4.20 A"/>
    <property type="chains" value="K=1-123"/>
</dbReference>
<dbReference type="PDB" id="6OT3">
    <property type="method" value="EM"/>
    <property type="resolution" value="3.90 A"/>
    <property type="chains" value="K=1-123"/>
</dbReference>
<dbReference type="PDB" id="6OUO">
    <property type="method" value="EM"/>
    <property type="resolution" value="3.70 A"/>
    <property type="chains" value="K=1-123"/>
</dbReference>
<dbReference type="PDB" id="6PJ6">
    <property type="method" value="EM"/>
    <property type="resolution" value="2.20 A"/>
    <property type="chains" value="S=1-122"/>
</dbReference>
<dbReference type="PDB" id="6Q97">
    <property type="method" value="EM"/>
    <property type="resolution" value="3.90 A"/>
    <property type="chains" value="K=1-123"/>
</dbReference>
<dbReference type="PDB" id="6Q98">
    <property type="method" value="EM"/>
    <property type="resolution" value="4.30 A"/>
    <property type="chains" value="K=1-123"/>
</dbReference>
<dbReference type="PDB" id="6Q9A">
    <property type="method" value="EM"/>
    <property type="resolution" value="3.70 A"/>
    <property type="chains" value="K=1-123"/>
</dbReference>
<dbReference type="PDB" id="6QDW">
    <property type="method" value="EM"/>
    <property type="resolution" value="2.83 A"/>
    <property type="chains" value="k=1-123"/>
</dbReference>
<dbReference type="PDB" id="6QUL">
    <property type="method" value="EM"/>
    <property type="resolution" value="3.00 A"/>
    <property type="chains" value="L=1-123"/>
</dbReference>
<dbReference type="PDB" id="6S0K">
    <property type="method" value="EM"/>
    <property type="resolution" value="3.10 A"/>
    <property type="chains" value="L=1-123"/>
</dbReference>
<dbReference type="PDB" id="6SZS">
    <property type="method" value="EM"/>
    <property type="resolution" value="3.06 A"/>
    <property type="chains" value="K=1-123"/>
</dbReference>
<dbReference type="PDB" id="6TBV">
    <property type="method" value="EM"/>
    <property type="resolution" value="2.70 A"/>
    <property type="chains" value="L141=1-123"/>
</dbReference>
<dbReference type="PDB" id="6TC3">
    <property type="method" value="EM"/>
    <property type="resolution" value="2.70 A"/>
    <property type="chains" value="L141=1-123"/>
</dbReference>
<dbReference type="PDB" id="6U48">
    <property type="method" value="EM"/>
    <property type="resolution" value="2.87 A"/>
    <property type="chains" value="CL=1-122"/>
</dbReference>
<dbReference type="PDB" id="6VU3">
    <property type="method" value="EM"/>
    <property type="resolution" value="3.70 A"/>
    <property type="chains" value="t=1-123"/>
</dbReference>
<dbReference type="PDB" id="6VWL">
    <property type="method" value="EM"/>
    <property type="resolution" value="3.10 A"/>
    <property type="chains" value="I=1-123"/>
</dbReference>
<dbReference type="PDB" id="6VWM">
    <property type="method" value="EM"/>
    <property type="resolution" value="3.40 A"/>
    <property type="chains" value="I=1-123"/>
</dbReference>
<dbReference type="PDB" id="6VWN">
    <property type="method" value="EM"/>
    <property type="resolution" value="3.40 A"/>
    <property type="chains" value="I=1-123"/>
</dbReference>
<dbReference type="PDB" id="6VYQ">
    <property type="method" value="EM"/>
    <property type="resolution" value="3.70 A"/>
    <property type="chains" value="t=1-123"/>
</dbReference>
<dbReference type="PDB" id="6VYR">
    <property type="method" value="EM"/>
    <property type="resolution" value="3.80 A"/>
    <property type="chains" value="t=1-123"/>
</dbReference>
<dbReference type="PDB" id="6VYS">
    <property type="method" value="EM"/>
    <property type="resolution" value="3.70 A"/>
    <property type="chains" value="t=1-123"/>
</dbReference>
<dbReference type="PDB" id="6VYT">
    <property type="method" value="EM"/>
    <property type="resolution" value="14.00 A"/>
    <property type="chains" value="t=1-123"/>
</dbReference>
<dbReference type="PDB" id="6VYU">
    <property type="method" value="EM"/>
    <property type="resolution" value="7.00 A"/>
    <property type="chains" value="t=1-123"/>
</dbReference>
<dbReference type="PDB" id="6VYW">
    <property type="method" value="EM"/>
    <property type="resolution" value="7.00 A"/>
    <property type="chains" value="t=1-123"/>
</dbReference>
<dbReference type="PDB" id="6VYX">
    <property type="method" value="EM"/>
    <property type="resolution" value="9.90 A"/>
    <property type="chains" value="t=1-123"/>
</dbReference>
<dbReference type="PDB" id="6VYY">
    <property type="method" value="EM"/>
    <property type="resolution" value="9.90 A"/>
    <property type="chains" value="t=1-123"/>
</dbReference>
<dbReference type="PDB" id="6VYZ">
    <property type="method" value="EM"/>
    <property type="resolution" value="9.90 A"/>
    <property type="chains" value="t=1-123"/>
</dbReference>
<dbReference type="PDB" id="6VZ2">
    <property type="method" value="EM"/>
    <property type="resolution" value="10.00 A"/>
    <property type="chains" value="t=1-123"/>
</dbReference>
<dbReference type="PDB" id="6VZ3">
    <property type="method" value="EM"/>
    <property type="resolution" value="8.90 A"/>
    <property type="chains" value="t=1-123"/>
</dbReference>
<dbReference type="PDB" id="6VZ5">
    <property type="method" value="EM"/>
    <property type="resolution" value="8.90 A"/>
    <property type="chains" value="t=1-123"/>
</dbReference>
<dbReference type="PDB" id="6VZ7">
    <property type="method" value="EM"/>
    <property type="resolution" value="7.00 A"/>
    <property type="chains" value="t=1-123"/>
</dbReference>
<dbReference type="PDB" id="6VZJ">
    <property type="method" value="EM"/>
    <property type="resolution" value="4.10 A"/>
    <property type="chains" value="t=1-123"/>
</dbReference>
<dbReference type="PDB" id="6WD0">
    <property type="method" value="EM"/>
    <property type="resolution" value="3.00 A"/>
    <property type="chains" value="k=1-122"/>
</dbReference>
<dbReference type="PDB" id="6WD1">
    <property type="method" value="EM"/>
    <property type="resolution" value="3.30 A"/>
    <property type="chains" value="k=1-122"/>
</dbReference>
<dbReference type="PDB" id="6WD2">
    <property type="method" value="EM"/>
    <property type="resolution" value="3.60 A"/>
    <property type="chains" value="k=1-122"/>
</dbReference>
<dbReference type="PDB" id="6WD3">
    <property type="method" value="EM"/>
    <property type="resolution" value="3.60 A"/>
    <property type="chains" value="k=1-122"/>
</dbReference>
<dbReference type="PDB" id="6WD4">
    <property type="method" value="EM"/>
    <property type="resolution" value="3.70 A"/>
    <property type="chains" value="k=1-122"/>
</dbReference>
<dbReference type="PDB" id="6WD5">
    <property type="method" value="EM"/>
    <property type="resolution" value="3.60 A"/>
    <property type="chains" value="k=1-122"/>
</dbReference>
<dbReference type="PDB" id="6WD6">
    <property type="method" value="EM"/>
    <property type="resolution" value="3.70 A"/>
    <property type="chains" value="k=1-122"/>
</dbReference>
<dbReference type="PDB" id="6WD7">
    <property type="method" value="EM"/>
    <property type="resolution" value="3.90 A"/>
    <property type="chains" value="k=1-122"/>
</dbReference>
<dbReference type="PDB" id="6WD8">
    <property type="method" value="EM"/>
    <property type="resolution" value="3.70 A"/>
    <property type="chains" value="k=1-122"/>
</dbReference>
<dbReference type="PDB" id="6WD9">
    <property type="method" value="EM"/>
    <property type="resolution" value="3.70 A"/>
    <property type="chains" value="k=1-122"/>
</dbReference>
<dbReference type="PDB" id="6WDA">
    <property type="method" value="EM"/>
    <property type="resolution" value="3.80 A"/>
    <property type="chains" value="k=1-122"/>
</dbReference>
<dbReference type="PDB" id="6WDB">
    <property type="method" value="EM"/>
    <property type="resolution" value="4.00 A"/>
    <property type="chains" value="k=1-122"/>
</dbReference>
<dbReference type="PDB" id="6WDC">
    <property type="method" value="EM"/>
    <property type="resolution" value="4.20 A"/>
    <property type="chains" value="k=1-122"/>
</dbReference>
<dbReference type="PDB" id="6WDD">
    <property type="method" value="EM"/>
    <property type="resolution" value="3.20 A"/>
    <property type="chains" value="k=1-122"/>
</dbReference>
<dbReference type="PDB" id="6WDE">
    <property type="method" value="EM"/>
    <property type="resolution" value="3.00 A"/>
    <property type="chains" value="k=1-122"/>
</dbReference>
<dbReference type="PDB" id="6WDF">
    <property type="method" value="EM"/>
    <property type="resolution" value="3.30 A"/>
    <property type="chains" value="k=1-122"/>
</dbReference>
<dbReference type="PDB" id="6WDG">
    <property type="method" value="EM"/>
    <property type="resolution" value="3.30 A"/>
    <property type="chains" value="k=1-122"/>
</dbReference>
<dbReference type="PDB" id="6WDH">
    <property type="method" value="EM"/>
    <property type="resolution" value="4.30 A"/>
    <property type="chains" value="k=1-122"/>
</dbReference>
<dbReference type="PDB" id="6WDI">
    <property type="method" value="EM"/>
    <property type="resolution" value="4.00 A"/>
    <property type="chains" value="k=1-122"/>
</dbReference>
<dbReference type="PDB" id="6WDJ">
    <property type="method" value="EM"/>
    <property type="resolution" value="3.70 A"/>
    <property type="chains" value="k=1-122"/>
</dbReference>
<dbReference type="PDB" id="6WDK">
    <property type="method" value="EM"/>
    <property type="resolution" value="3.60 A"/>
    <property type="chains" value="k=1-122"/>
</dbReference>
<dbReference type="PDB" id="6WDL">
    <property type="method" value="EM"/>
    <property type="resolution" value="3.70 A"/>
    <property type="chains" value="k=1-122"/>
</dbReference>
<dbReference type="PDB" id="6WDM">
    <property type="method" value="EM"/>
    <property type="resolution" value="3.60 A"/>
    <property type="chains" value="k=1-122"/>
</dbReference>
<dbReference type="PDB" id="6WNT">
    <property type="method" value="EM"/>
    <property type="resolution" value="3.10 A"/>
    <property type="chains" value="k=1-122"/>
</dbReference>
<dbReference type="PDB" id="6WNV">
    <property type="method" value="EM"/>
    <property type="resolution" value="3.50 A"/>
    <property type="chains" value="k=1-122"/>
</dbReference>
<dbReference type="PDB" id="6WNW">
    <property type="method" value="EM"/>
    <property type="resolution" value="3.20 A"/>
    <property type="chains" value="k=1-122"/>
</dbReference>
<dbReference type="PDB" id="6X6T">
    <property type="method" value="EM"/>
    <property type="resolution" value="3.20 A"/>
    <property type="chains" value="t=1-123"/>
</dbReference>
<dbReference type="PDB" id="6X7F">
    <property type="method" value="EM"/>
    <property type="resolution" value="3.50 A"/>
    <property type="chains" value="t=1-123"/>
</dbReference>
<dbReference type="PDB" id="6X7K">
    <property type="method" value="EM"/>
    <property type="resolution" value="3.10 A"/>
    <property type="chains" value="t=1-123"/>
</dbReference>
<dbReference type="PDB" id="6X9Q">
    <property type="method" value="EM"/>
    <property type="resolution" value="4.80 A"/>
    <property type="chains" value="t=1-123"/>
</dbReference>
<dbReference type="PDB" id="6XDQ">
    <property type="method" value="EM"/>
    <property type="resolution" value="3.70 A"/>
    <property type="chains" value="t=1-123"/>
</dbReference>
<dbReference type="PDB" id="6XDR">
    <property type="method" value="EM"/>
    <property type="resolution" value="4.70 A"/>
    <property type="chains" value="t=1-123"/>
</dbReference>
<dbReference type="PDB" id="6XGF">
    <property type="method" value="EM"/>
    <property type="resolution" value="5.00 A"/>
    <property type="chains" value="t=1-123"/>
</dbReference>
<dbReference type="PDB" id="6XII">
    <property type="method" value="EM"/>
    <property type="resolution" value="7.00 A"/>
    <property type="chains" value="t=1-123"/>
</dbReference>
<dbReference type="PDB" id="6XIJ">
    <property type="method" value="EM"/>
    <property type="resolution" value="8.00 A"/>
    <property type="chains" value="t=1-123"/>
</dbReference>
<dbReference type="PDB" id="6XZ7">
    <property type="method" value="EM"/>
    <property type="resolution" value="2.10 A"/>
    <property type="chains" value="K=1-123"/>
</dbReference>
<dbReference type="PDB" id="6XZA">
    <property type="method" value="EM"/>
    <property type="resolution" value="2.66 A"/>
    <property type="chains" value="K2=1-123"/>
</dbReference>
<dbReference type="PDB" id="6XZB">
    <property type="method" value="EM"/>
    <property type="resolution" value="2.54 A"/>
    <property type="chains" value="K2=1-123"/>
</dbReference>
<dbReference type="PDB" id="6Y69">
    <property type="method" value="EM"/>
    <property type="resolution" value="2.86 A"/>
    <property type="chains" value="K=1-122"/>
</dbReference>
<dbReference type="PDB" id="6YS3">
    <property type="method" value="EM"/>
    <property type="resolution" value="2.58 A"/>
    <property type="chains" value="k=1-123"/>
</dbReference>
<dbReference type="PDB" id="6YSR">
    <property type="method" value="EM"/>
    <property type="resolution" value="3.10 A"/>
    <property type="chains" value="K=1-123"/>
</dbReference>
<dbReference type="PDB" id="6YSS">
    <property type="method" value="EM"/>
    <property type="resolution" value="2.60 A"/>
    <property type="chains" value="K=1-123"/>
</dbReference>
<dbReference type="PDB" id="6YST">
    <property type="method" value="EM"/>
    <property type="resolution" value="3.20 A"/>
    <property type="chains" value="K=1-123"/>
</dbReference>
<dbReference type="PDB" id="6YSU">
    <property type="method" value="EM"/>
    <property type="resolution" value="3.70 A"/>
    <property type="chains" value="K=1-123"/>
</dbReference>
<dbReference type="PDB" id="6ZTJ">
    <property type="method" value="EM"/>
    <property type="resolution" value="3.40 A"/>
    <property type="chains" value="BL=1-123"/>
</dbReference>
<dbReference type="PDB" id="6ZTL">
    <property type="method" value="EM"/>
    <property type="resolution" value="3.50 A"/>
    <property type="chains" value="BL=1-123"/>
</dbReference>
<dbReference type="PDB" id="6ZTM">
    <property type="method" value="EM"/>
    <property type="resolution" value="3.30 A"/>
    <property type="chains" value="BL=1-123"/>
</dbReference>
<dbReference type="PDB" id="6ZTN">
    <property type="method" value="EM"/>
    <property type="resolution" value="3.90 A"/>
    <property type="chains" value="BL=1-123"/>
</dbReference>
<dbReference type="PDB" id="6ZTO">
    <property type="method" value="EM"/>
    <property type="resolution" value="3.00 A"/>
    <property type="chains" value="BL=1-123"/>
</dbReference>
<dbReference type="PDB" id="6ZTP">
    <property type="method" value="EM"/>
    <property type="resolution" value="3.00 A"/>
    <property type="chains" value="BL=1-123"/>
</dbReference>
<dbReference type="PDB" id="6ZU1">
    <property type="method" value="EM"/>
    <property type="resolution" value="3.00 A"/>
    <property type="chains" value="BL=1-123"/>
</dbReference>
<dbReference type="PDB" id="7ABZ">
    <property type="method" value="EM"/>
    <property type="resolution" value="3.21 A"/>
    <property type="chains" value="K=1-122"/>
</dbReference>
<dbReference type="PDB" id="7AC7">
    <property type="method" value="EM"/>
    <property type="resolution" value="3.08 A"/>
    <property type="chains" value="K=1-123"/>
</dbReference>
<dbReference type="PDB" id="7ACJ">
    <property type="method" value="EM"/>
    <property type="resolution" value="3.20 A"/>
    <property type="chains" value="K=1-123"/>
</dbReference>
<dbReference type="PDB" id="7ACR">
    <property type="method" value="EM"/>
    <property type="resolution" value="3.44 A"/>
    <property type="chains" value="K=1-123"/>
</dbReference>
<dbReference type="PDB" id="7B5K">
    <property type="method" value="EM"/>
    <property type="resolution" value="2.90 A"/>
    <property type="chains" value="K=1-123"/>
</dbReference>
<dbReference type="PDB" id="7BL2">
    <property type="method" value="EM"/>
    <property type="resolution" value="3.70 A"/>
    <property type="chains" value="K=1-123"/>
</dbReference>
<dbReference type="PDB" id="7BL3">
    <property type="method" value="EM"/>
    <property type="resolution" value="3.50 A"/>
    <property type="chains" value="K=1-123"/>
</dbReference>
<dbReference type="PDB" id="7BL4">
    <property type="method" value="EM"/>
    <property type="resolution" value="2.40 A"/>
    <property type="chains" value="K=1-123"/>
</dbReference>
<dbReference type="PDB" id="7BL5">
    <property type="method" value="EM"/>
    <property type="resolution" value="3.30 A"/>
    <property type="chains" value="K=1-123"/>
</dbReference>
<dbReference type="PDB" id="7BL6">
    <property type="method" value="EM"/>
    <property type="resolution" value="4.00 A"/>
    <property type="chains" value="K=1-123"/>
</dbReference>
<dbReference type="PDB" id="7BV8">
    <property type="method" value="EM"/>
    <property type="resolution" value="3.14 A"/>
    <property type="chains" value="L=1-123"/>
</dbReference>
<dbReference type="PDB" id="7D6Z">
    <property type="method" value="EM"/>
    <property type="resolution" value="3.40 A"/>
    <property type="chains" value="K=1-123"/>
</dbReference>
<dbReference type="PDB" id="7D80">
    <property type="method" value="EM"/>
    <property type="resolution" value="4.10 A"/>
    <property type="chains" value="j=1-123"/>
</dbReference>
<dbReference type="PDB" id="7JSS">
    <property type="method" value="EM"/>
    <property type="resolution" value="3.70 A"/>
    <property type="chains" value="k=1-122"/>
</dbReference>
<dbReference type="PDB" id="7JSW">
    <property type="method" value="EM"/>
    <property type="resolution" value="3.80 A"/>
    <property type="chains" value="k=1-122"/>
</dbReference>
<dbReference type="PDB" id="7JSZ">
    <property type="method" value="EM"/>
    <property type="resolution" value="3.70 A"/>
    <property type="chains" value="k=1-122"/>
</dbReference>
<dbReference type="PDB" id="7JT1">
    <property type="method" value="EM"/>
    <property type="resolution" value="3.30 A"/>
    <property type="chains" value="k=1-122"/>
</dbReference>
<dbReference type="PDB" id="7JT2">
    <property type="method" value="EM"/>
    <property type="resolution" value="3.50 A"/>
    <property type="chains" value="k=1-122"/>
</dbReference>
<dbReference type="PDB" id="7JT3">
    <property type="method" value="EM"/>
    <property type="resolution" value="3.70 A"/>
    <property type="chains" value="k=1-122"/>
</dbReference>
<dbReference type="PDB" id="7K00">
    <property type="method" value="EM"/>
    <property type="resolution" value="1.98 A"/>
    <property type="chains" value="j=1-123"/>
</dbReference>
<dbReference type="PDB" id="7K50">
    <property type="method" value="EM"/>
    <property type="resolution" value="3.40 A"/>
    <property type="chains" value="k=1-122"/>
</dbReference>
<dbReference type="PDB" id="7K51">
    <property type="method" value="EM"/>
    <property type="resolution" value="3.50 A"/>
    <property type="chains" value="k=1-122"/>
</dbReference>
<dbReference type="PDB" id="7K52">
    <property type="method" value="EM"/>
    <property type="resolution" value="3.40 A"/>
    <property type="chains" value="k=1-122"/>
</dbReference>
<dbReference type="PDB" id="7K53">
    <property type="method" value="EM"/>
    <property type="resolution" value="3.20 A"/>
    <property type="chains" value="k=1-122"/>
</dbReference>
<dbReference type="PDB" id="7K54">
    <property type="method" value="EM"/>
    <property type="resolution" value="3.20 A"/>
    <property type="chains" value="k=1-122"/>
</dbReference>
<dbReference type="PDB" id="7K55">
    <property type="method" value="EM"/>
    <property type="resolution" value="3.30 A"/>
    <property type="chains" value="k=1-122"/>
</dbReference>
<dbReference type="PDB" id="7LV0">
    <property type="method" value="EM"/>
    <property type="resolution" value="3.20 A"/>
    <property type="chains" value="k=1-122"/>
</dbReference>
<dbReference type="PDB" id="7LVK">
    <property type="method" value="EM"/>
    <property type="resolution" value="2.20 A"/>
    <property type="chains" value="S=1-123"/>
</dbReference>
<dbReference type="PDB" id="7M5D">
    <property type="method" value="EM"/>
    <property type="resolution" value="2.80 A"/>
    <property type="chains" value="K=1-123"/>
</dbReference>
<dbReference type="PDB" id="7N1P">
    <property type="method" value="EM"/>
    <property type="resolution" value="2.33 A"/>
    <property type="chains" value="LN=1-123"/>
</dbReference>
<dbReference type="PDB" id="7N2C">
    <property type="method" value="EM"/>
    <property type="resolution" value="2.72 A"/>
    <property type="chains" value="LN=1-123"/>
</dbReference>
<dbReference type="PDB" id="7N2U">
    <property type="method" value="EM"/>
    <property type="resolution" value="2.53 A"/>
    <property type="chains" value="LN=1-123"/>
</dbReference>
<dbReference type="PDB" id="7N2V">
    <property type="method" value="EM"/>
    <property type="resolution" value="2.54 A"/>
    <property type="chains" value="LN=1-123"/>
</dbReference>
<dbReference type="PDB" id="7N30">
    <property type="method" value="EM"/>
    <property type="resolution" value="2.66 A"/>
    <property type="chains" value="LN=1-123"/>
</dbReference>
<dbReference type="PDB" id="7N31">
    <property type="method" value="EM"/>
    <property type="resolution" value="2.69 A"/>
    <property type="chains" value="LN=1-123"/>
</dbReference>
<dbReference type="PDB" id="7NBU">
    <property type="method" value="EM"/>
    <property type="resolution" value="3.11 A"/>
    <property type="chains" value="j=1-123"/>
</dbReference>
<dbReference type="PDB" id="7NWT">
    <property type="method" value="EM"/>
    <property type="resolution" value="2.66 A"/>
    <property type="chains" value="K=1-123"/>
</dbReference>
<dbReference type="PDB" id="7NWW">
    <property type="method" value="EM"/>
    <property type="resolution" value="3.05 A"/>
    <property type="chains" value="J=1-123"/>
</dbReference>
<dbReference type="PDB" id="7O19">
    <property type="method" value="EM"/>
    <property type="resolution" value="2.90 A"/>
    <property type="chains" value="BK=1-123"/>
</dbReference>
<dbReference type="PDB" id="7O1A">
    <property type="method" value="EM"/>
    <property type="resolution" value="2.40 A"/>
    <property type="chains" value="BK=1-123"/>
</dbReference>
<dbReference type="PDB" id="7O1C">
    <property type="method" value="EM"/>
    <property type="resolution" value="2.60 A"/>
    <property type="chains" value="BK=1-123"/>
</dbReference>
<dbReference type="PDB" id="7ODE">
    <property type="method" value="EM"/>
    <property type="resolution" value="2.84 A"/>
    <property type="chains" value="S=1-123"/>
</dbReference>
<dbReference type="PDB" id="7OIF">
    <property type="method" value="EM"/>
    <property type="resolution" value="3.00 A"/>
    <property type="chains" value="J=1-123"/>
</dbReference>
<dbReference type="PDB" id="7OIG">
    <property type="method" value="EM"/>
    <property type="resolution" value="3.20 A"/>
    <property type="chains" value="J=1-123"/>
</dbReference>
<dbReference type="PDB" id="7OII">
    <property type="method" value="EM"/>
    <property type="resolution" value="3.00 A"/>
    <property type="chains" value="J=1-123"/>
</dbReference>
<dbReference type="PDB" id="7OIZ">
    <property type="method" value="EM"/>
    <property type="resolution" value="2.90 A"/>
    <property type="chains" value="j=1-123"/>
</dbReference>
<dbReference type="PDB" id="7OJ0">
    <property type="method" value="EM"/>
    <property type="resolution" value="3.50 A"/>
    <property type="chains" value="j=1-123"/>
</dbReference>
<dbReference type="PDB" id="7OT5">
    <property type="method" value="EM"/>
    <property type="resolution" value="2.90 A"/>
    <property type="chains" value="J=1-123"/>
</dbReference>
<dbReference type="PDB" id="7P3K">
    <property type="method" value="EM"/>
    <property type="resolution" value="2.90 A"/>
    <property type="chains" value="j=1-123"/>
</dbReference>
<dbReference type="PDB" id="7PJS">
    <property type="method" value="EM"/>
    <property type="resolution" value="2.35 A"/>
    <property type="chains" value="K=1-123"/>
</dbReference>
<dbReference type="PDB" id="7PJT">
    <property type="method" value="EM"/>
    <property type="resolution" value="6.00 A"/>
    <property type="chains" value="K=1-123"/>
</dbReference>
<dbReference type="PDB" id="7PJU">
    <property type="method" value="EM"/>
    <property type="resolution" value="9.50 A"/>
    <property type="chains" value="K=1-123"/>
</dbReference>
<dbReference type="PDB" id="7PJV">
    <property type="method" value="EM"/>
    <property type="resolution" value="3.10 A"/>
    <property type="chains" value="K=1-123"/>
</dbReference>
<dbReference type="PDB" id="7PJW">
    <property type="method" value="EM"/>
    <property type="resolution" value="4.00 A"/>
    <property type="chains" value="K=1-123"/>
</dbReference>
<dbReference type="PDB" id="7PJX">
    <property type="method" value="EM"/>
    <property type="resolution" value="6.50 A"/>
    <property type="chains" value="K=1-123"/>
</dbReference>
<dbReference type="PDB" id="7PJY">
    <property type="method" value="EM"/>
    <property type="resolution" value="3.10 A"/>
    <property type="chains" value="K=1-123"/>
</dbReference>
<dbReference type="PDB" id="7PJZ">
    <property type="method" value="EM"/>
    <property type="resolution" value="6.00 A"/>
    <property type="chains" value="K=1-123"/>
</dbReference>
<dbReference type="PDB" id="7Q4K">
    <property type="method" value="EM"/>
    <property type="resolution" value="3.00 A"/>
    <property type="chains" value="BK=1-123"/>
</dbReference>
<dbReference type="PDB" id="7QG8">
    <property type="method" value="EM"/>
    <property type="resolution" value="3.97 A"/>
    <property type="chains" value="X=1-123"/>
</dbReference>
<dbReference type="PDB" id="7QGH">
    <property type="method" value="EM"/>
    <property type="resolution" value="4.48 A"/>
    <property type="chains" value="X=1-123"/>
</dbReference>
<dbReference type="PDB" id="7QGN">
    <property type="method" value="EM"/>
    <property type="resolution" value="3.37 A"/>
    <property type="chains" value="X=1-123"/>
</dbReference>
<dbReference type="PDB" id="7QGR">
    <property type="method" value="EM"/>
    <property type="resolution" value="5.70 A"/>
    <property type="chains" value="X=1-123"/>
</dbReference>
<dbReference type="PDB" id="7QQ3">
    <property type="method" value="EM"/>
    <property type="resolution" value="2.10 A"/>
    <property type="chains" value="S=1-123"/>
</dbReference>
<dbReference type="PDB" id="7S1G">
    <property type="method" value="EM"/>
    <property type="resolution" value="2.48 A"/>
    <property type="chains" value="S=1-123"/>
</dbReference>
<dbReference type="PDB" id="7S1H">
    <property type="method" value="EM"/>
    <property type="resolution" value="2.35 A"/>
    <property type="chains" value="S=1-123"/>
</dbReference>
<dbReference type="PDB" id="7S1I">
    <property type="method" value="EM"/>
    <property type="resolution" value="2.48 A"/>
    <property type="chains" value="S=1-123"/>
</dbReference>
<dbReference type="PDB" id="7S1J">
    <property type="method" value="EM"/>
    <property type="resolution" value="2.47 A"/>
    <property type="chains" value="S=1-123"/>
</dbReference>
<dbReference type="PDB" id="7S1K">
    <property type="method" value="EM"/>
    <property type="resolution" value="2.42 A"/>
    <property type="chains" value="S=1-123"/>
</dbReference>
<dbReference type="PDB" id="7SA4">
    <property type="method" value="EM"/>
    <property type="resolution" value="2.55 A"/>
    <property type="chains" value="K=1-123"/>
</dbReference>
<dbReference type="PDB" id="7SS9">
    <property type="method" value="EM"/>
    <property type="resolution" value="3.90 A"/>
    <property type="chains" value="k=1-122"/>
</dbReference>
<dbReference type="PDB" id="7SSD">
    <property type="method" value="EM"/>
    <property type="resolution" value="3.30 A"/>
    <property type="chains" value="k=1-122"/>
</dbReference>
<dbReference type="PDB" id="7SSL">
    <property type="method" value="EM"/>
    <property type="resolution" value="3.80 A"/>
    <property type="chains" value="k=1-122"/>
</dbReference>
<dbReference type="PDB" id="7SSN">
    <property type="method" value="EM"/>
    <property type="resolution" value="3.20 A"/>
    <property type="chains" value="k=1-122"/>
</dbReference>
<dbReference type="PDB" id="7SSO">
    <property type="method" value="EM"/>
    <property type="resolution" value="3.20 A"/>
    <property type="chains" value="k=1-122"/>
</dbReference>
<dbReference type="PDB" id="7SSW">
    <property type="method" value="EM"/>
    <property type="resolution" value="3.80 A"/>
    <property type="chains" value="k=1-122"/>
</dbReference>
<dbReference type="PDB" id="7ST2">
    <property type="method" value="EM"/>
    <property type="resolution" value="2.90 A"/>
    <property type="chains" value="k=1-122"/>
</dbReference>
<dbReference type="PDB" id="7ST6">
    <property type="method" value="EM"/>
    <property type="resolution" value="3.00 A"/>
    <property type="chains" value="k=1-122"/>
</dbReference>
<dbReference type="PDB" id="7ST7">
    <property type="method" value="EM"/>
    <property type="resolution" value="3.20 A"/>
    <property type="chains" value="k=1-122"/>
</dbReference>
<dbReference type="PDB" id="7TOS">
    <property type="method" value="EM"/>
    <property type="resolution" value="2.90 A"/>
    <property type="chains" value="L14=1-122"/>
</dbReference>
<dbReference type="PDB" id="7UG7">
    <property type="method" value="EM"/>
    <property type="resolution" value="2.58 A"/>
    <property type="chains" value="LN=1-123"/>
</dbReference>
<dbReference type="PDB" id="7UPH">
    <property type="method" value="EM"/>
    <property type="resolution" value="4.18 A"/>
    <property type="chains" value="S=1-122"/>
</dbReference>
<dbReference type="PDB" id="7Y7C">
    <property type="method" value="EM"/>
    <property type="resolution" value="2.51 A"/>
    <property type="chains" value="j=1-123"/>
</dbReference>
<dbReference type="PDB" id="7Y7D">
    <property type="method" value="EM"/>
    <property type="resolution" value="2.58 A"/>
    <property type="chains" value="j=1-123"/>
</dbReference>
<dbReference type="PDB" id="7Y7E">
    <property type="method" value="EM"/>
    <property type="resolution" value="2.41 A"/>
    <property type="chains" value="j=1-123"/>
</dbReference>
<dbReference type="PDB" id="7Y7F">
    <property type="method" value="EM"/>
    <property type="resolution" value="2.43 A"/>
    <property type="chains" value="j=1-123"/>
</dbReference>
<dbReference type="PDB" id="7Y7G">
    <property type="method" value="EM"/>
    <property type="resolution" value="2.34 A"/>
    <property type="chains" value="j=1-123"/>
</dbReference>
<dbReference type="PDB" id="7Y7H">
    <property type="method" value="EM"/>
    <property type="resolution" value="2.51 A"/>
    <property type="chains" value="j=1-123"/>
</dbReference>
<dbReference type="PDB" id="7Z20">
    <property type="method" value="EM"/>
    <property type="resolution" value="2.29 A"/>
    <property type="chains" value="k=1-123"/>
</dbReference>
<dbReference type="PDB" id="7ZOD">
    <property type="method" value="EM"/>
    <property type="resolution" value="2.56 A"/>
    <property type="chains" value="k=1-123"/>
</dbReference>
<dbReference type="PDB" id="7ZP8">
    <property type="method" value="EM"/>
    <property type="resolution" value="2.20 A"/>
    <property type="chains" value="k=1-123"/>
</dbReference>
<dbReference type="PDB" id="7ZQ5">
    <property type="method" value="EM"/>
    <property type="resolution" value="2.70 A"/>
    <property type="chains" value="k=1-123"/>
</dbReference>
<dbReference type="PDB" id="7ZQ6">
    <property type="method" value="EM"/>
    <property type="resolution" value="2.75 A"/>
    <property type="chains" value="k=1-123"/>
</dbReference>
<dbReference type="PDB" id="7ZTA">
    <property type="method" value="EM"/>
    <property type="resolution" value="2.70 A"/>
    <property type="chains" value="L141=1-123"/>
</dbReference>
<dbReference type="PDB" id="8A3L">
    <property type="method" value="EM"/>
    <property type="resolution" value="3.42 A"/>
    <property type="chains" value="j=1-123"/>
</dbReference>
<dbReference type="PDB" id="8AKN">
    <property type="method" value="EM"/>
    <property type="resolution" value="2.30 A"/>
    <property type="chains" value="j=1-123"/>
</dbReference>
<dbReference type="PDB" id="8AM9">
    <property type="method" value="EM"/>
    <property type="resolution" value="2.80 A"/>
    <property type="chains" value="j=1-123"/>
</dbReference>
<dbReference type="PDB" id="8ANA">
    <property type="method" value="EM"/>
    <property type="resolution" value="2.10 A"/>
    <property type="chains" value="j=1-123"/>
</dbReference>
<dbReference type="PDB" id="8AP4">
    <property type="method" value="EM"/>
    <property type="resolution" value="3.00 A"/>
    <property type="chains" value="j=1-123"/>
</dbReference>
<dbReference type="PDB" id="8AYE">
    <property type="method" value="EM"/>
    <property type="resolution" value="1.96 A"/>
    <property type="chains" value="j=1-123"/>
</dbReference>
<dbReference type="PDB" id="8B0X">
    <property type="method" value="EM"/>
    <property type="resolution" value="1.55 A"/>
    <property type="chains" value="j=1-123"/>
</dbReference>
<dbReference type="PDB" id="8B7Y">
    <property type="method" value="EM"/>
    <property type="resolution" value="3.00 A"/>
    <property type="chains" value="S=1-123"/>
</dbReference>
<dbReference type="PDB" id="8BF7">
    <property type="method" value="EM"/>
    <property type="resolution" value="2.33 A"/>
    <property type="chains" value="H=1-123"/>
</dbReference>
<dbReference type="PDB" id="8BGE">
    <property type="method" value="EM"/>
    <property type="resolution" value="2.11 A"/>
    <property type="chains" value="H=1-123"/>
</dbReference>
<dbReference type="PDB" id="8BGH">
    <property type="method" value="EM"/>
    <property type="resolution" value="2.88 A"/>
    <property type="chains" value="H=1-123"/>
</dbReference>
<dbReference type="PDB" id="8BH4">
    <property type="method" value="EM"/>
    <property type="resolution" value="2.62 A"/>
    <property type="chains" value="H=1-123"/>
</dbReference>
<dbReference type="PDB" id="8BHJ">
    <property type="method" value="EM"/>
    <property type="resolution" value="2.81 A"/>
    <property type="chains" value="H=1-123"/>
</dbReference>
<dbReference type="PDB" id="8BHL">
    <property type="method" value="EM"/>
    <property type="resolution" value="2.21 A"/>
    <property type="chains" value="H=1-123"/>
</dbReference>
<dbReference type="PDB" id="8BHN">
    <property type="method" value="EM"/>
    <property type="resolution" value="2.85 A"/>
    <property type="chains" value="H=1-123"/>
</dbReference>
<dbReference type="PDB" id="8BHP">
    <property type="method" value="EM"/>
    <property type="resolution" value="2.37 A"/>
    <property type="chains" value="H=1-123"/>
</dbReference>
<dbReference type="PDB" id="8BIL">
    <property type="method" value="EM"/>
    <property type="resolution" value="2.04 A"/>
    <property type="chains" value="H=1-123"/>
</dbReference>
<dbReference type="PDB" id="8BIM">
    <property type="method" value="EM"/>
    <property type="resolution" value="2.04 A"/>
    <property type="chains" value="H=1-123"/>
</dbReference>
<dbReference type="PDB" id="8C8X">
    <property type="method" value="EM"/>
    <property type="resolution" value="3.93 A"/>
    <property type="chains" value="K=1-123"/>
</dbReference>
<dbReference type="PDB" id="8C8Y">
    <property type="method" value="EM"/>
    <property type="resolution" value="3.03 A"/>
    <property type="chains" value="K=1-123"/>
</dbReference>
<dbReference type="PDB" id="8C8Z">
    <property type="method" value="EM"/>
    <property type="resolution" value="3.12 A"/>
    <property type="chains" value="K=1-123"/>
</dbReference>
<dbReference type="PDB" id="8C90">
    <property type="method" value="EM"/>
    <property type="resolution" value="3.15 A"/>
    <property type="chains" value="K=1-123"/>
</dbReference>
<dbReference type="PDB" id="8C91">
    <property type="method" value="EM"/>
    <property type="resolution" value="4.19 A"/>
    <property type="chains" value="K=1-123"/>
</dbReference>
<dbReference type="PDB" id="8C92">
    <property type="method" value="EM"/>
    <property type="resolution" value="3.79 A"/>
    <property type="chains" value="K=1-123"/>
</dbReference>
<dbReference type="PDB" id="8C93">
    <property type="method" value="EM"/>
    <property type="resolution" value="4.17 A"/>
    <property type="chains" value="K=1-123"/>
</dbReference>
<dbReference type="PDB" id="8C94">
    <property type="method" value="EM"/>
    <property type="resolution" value="3.80 A"/>
    <property type="chains" value="K=1-123"/>
</dbReference>
<dbReference type="PDB" id="8C96">
    <property type="method" value="EM"/>
    <property type="resolution" value="4.43 A"/>
    <property type="chains" value="K=1-123"/>
</dbReference>
<dbReference type="PDB" id="8C97">
    <property type="method" value="EM"/>
    <property type="resolution" value="4.07 A"/>
    <property type="chains" value="K=1-123"/>
</dbReference>
<dbReference type="PDB" id="8CAM">
    <property type="method" value="EM"/>
    <property type="resolution" value="1.86 A"/>
    <property type="chains" value="j=1-123"/>
</dbReference>
<dbReference type="PDB" id="8CEU">
    <property type="method" value="EM"/>
    <property type="resolution" value="1.83 A"/>
    <property type="chains" value="j=1-123"/>
</dbReference>
<dbReference type="PDB" id="8CGD">
    <property type="method" value="EM"/>
    <property type="resolution" value="1.98 A"/>
    <property type="chains" value="j=1-123"/>
</dbReference>
<dbReference type="PDB" id="8CGK">
    <property type="method" value="EM"/>
    <property type="resolution" value="1.64 A"/>
    <property type="chains" value="j=1-123"/>
</dbReference>
<dbReference type="PDB" id="8CGV">
    <property type="method" value="EM"/>
    <property type="resolution" value="1.66 A"/>
    <property type="chains" value="j=1-123"/>
</dbReference>
<dbReference type="PDB" id="8EIU">
    <property type="method" value="EM"/>
    <property type="resolution" value="2.24 A"/>
    <property type="chains" value="j=1-123"/>
</dbReference>
<dbReference type="PDB" id="8EKC">
    <property type="method" value="EM"/>
    <property type="resolution" value="2.70 A"/>
    <property type="chains" value="M=1-123"/>
</dbReference>
<dbReference type="PDB" id="8EMM">
    <property type="method" value="EM"/>
    <property type="resolution" value="2.10 A"/>
    <property type="chains" value="j=1-123"/>
</dbReference>
<dbReference type="PDB" id="8FIZ">
    <property type="method" value="EM"/>
    <property type="resolution" value="3.80 A"/>
    <property type="chains" value="BS=1-123"/>
</dbReference>
<dbReference type="PDB" id="8FTO">
    <property type="method" value="EM"/>
    <property type="resolution" value="1.85 A"/>
    <property type="chains" value="j=1-123"/>
</dbReference>
<dbReference type="PDB" id="8FZD">
    <property type="method" value="EM"/>
    <property type="resolution" value="3.10 A"/>
    <property type="chains" value="M=1-123"/>
</dbReference>
<dbReference type="PDB" id="8FZE">
    <property type="method" value="EM"/>
    <property type="resolution" value="3.00 A"/>
    <property type="chains" value="M=1-123"/>
</dbReference>
<dbReference type="PDB" id="8FZF">
    <property type="method" value="EM"/>
    <property type="resolution" value="3.20 A"/>
    <property type="chains" value="M=1-123"/>
</dbReference>
<dbReference type="PDB" id="8FZG">
    <property type="method" value="EM"/>
    <property type="resolution" value="3.10 A"/>
    <property type="chains" value="M=1-123"/>
</dbReference>
<dbReference type="PDB" id="8FZH">
    <property type="method" value="EM"/>
    <property type="resolution" value="2.90 A"/>
    <property type="chains" value="M=1-123"/>
</dbReference>
<dbReference type="PDB" id="8FZI">
    <property type="method" value="EM"/>
    <property type="resolution" value="3.10 A"/>
    <property type="chains" value="M=1-123"/>
</dbReference>
<dbReference type="PDB" id="8FZJ">
    <property type="method" value="EM"/>
    <property type="resolution" value="3.00 A"/>
    <property type="chains" value="M=1-123"/>
</dbReference>
<dbReference type="PDB" id="8G2U">
    <property type="method" value="EM"/>
    <property type="resolution" value="3.00 A"/>
    <property type="chains" value="K=2-123"/>
</dbReference>
<dbReference type="PDB" id="8G31">
    <property type="method" value="EM"/>
    <property type="resolution" value="3.20 A"/>
    <property type="chains" value="K=2-123"/>
</dbReference>
<dbReference type="PDB" id="8G34">
    <property type="method" value="EM"/>
    <property type="resolution" value="3.20 A"/>
    <property type="chains" value="K=2-123"/>
</dbReference>
<dbReference type="PDB" id="8G38">
    <property type="method" value="EM"/>
    <property type="resolution" value="3.20 A"/>
    <property type="chains" value="K=2-123"/>
</dbReference>
<dbReference type="PDB" id="8G6W">
    <property type="method" value="EM"/>
    <property type="resolution" value="2.02 A"/>
    <property type="chains" value="j=1-123"/>
</dbReference>
<dbReference type="PDB" id="8G6X">
    <property type="method" value="EM"/>
    <property type="resolution" value="2.31 A"/>
    <property type="chains" value="j=1-123"/>
</dbReference>
<dbReference type="PDB" id="8G6Y">
    <property type="method" value="EM"/>
    <property type="resolution" value="2.09 A"/>
    <property type="chains" value="j=1-123"/>
</dbReference>
<dbReference type="PDB" id="8G7P">
    <property type="method" value="EM"/>
    <property type="resolution" value="2.90 A"/>
    <property type="chains" value="M=1-123"/>
</dbReference>
<dbReference type="PDB" id="8G7Q">
    <property type="method" value="EM"/>
    <property type="resolution" value="3.10 A"/>
    <property type="chains" value="M=1-123"/>
</dbReference>
<dbReference type="PDB" id="8G7R">
    <property type="method" value="EM"/>
    <property type="resolution" value="2.80 A"/>
    <property type="chains" value="M=1-123"/>
</dbReference>
<dbReference type="PDB" id="8G7S">
    <property type="method" value="EM"/>
    <property type="resolution" value="3.10 A"/>
    <property type="chains" value="M=1-123"/>
</dbReference>
<dbReference type="PDB" id="8HSP">
    <property type="method" value="EM"/>
    <property type="resolution" value="2.32 A"/>
    <property type="chains" value="j=1-123"/>
</dbReference>
<dbReference type="PDB" id="8HTZ">
    <property type="method" value="EM"/>
    <property type="resolution" value="2.40 A"/>
    <property type="chains" value="j=1-123"/>
</dbReference>
<dbReference type="PDB" id="8HU1">
    <property type="method" value="EM"/>
    <property type="resolution" value="2.69 A"/>
    <property type="chains" value="j=1-123"/>
</dbReference>
<dbReference type="PDB" id="8IFB">
    <property type="method" value="EM"/>
    <property type="resolution" value="2.43 A"/>
    <property type="chains" value="j=1-123"/>
</dbReference>
<dbReference type="PDB" id="8IFC">
    <property type="method" value="EM"/>
    <property type="resolution" value="2.90 A"/>
    <property type="chains" value="j=1-123"/>
</dbReference>
<dbReference type="PDB" id="8J1Z">
    <property type="method" value="EM"/>
    <property type="resolution" value="2.60 A"/>
    <property type="chains" value="j=1-123"/>
</dbReference>
<dbReference type="PDB" id="8KIE">
    <property type="method" value="EM"/>
    <property type="resolution" value="2.50 A"/>
    <property type="chains" value="j=1-123"/>
</dbReference>
<dbReference type="PDB" id="8P16">
    <property type="method" value="EM"/>
    <property type="resolution" value="2.77 A"/>
    <property type="chains" value="K=1-123"/>
</dbReference>
<dbReference type="PDB" id="8P17">
    <property type="method" value="EM"/>
    <property type="resolution" value="2.78 A"/>
    <property type="chains" value="K=1-123"/>
</dbReference>
<dbReference type="PDB" id="8P18">
    <property type="method" value="EM"/>
    <property type="resolution" value="2.77 A"/>
    <property type="chains" value="K=1-123"/>
</dbReference>
<dbReference type="PDB" id="8PEG">
    <property type="method" value="EM"/>
    <property type="resolution" value="3.30 A"/>
    <property type="chains" value="n=1-123"/>
</dbReference>
<dbReference type="PDB" id="8PHJ">
    <property type="method" value="EM"/>
    <property type="resolution" value="3.67 A"/>
    <property type="chains" value="j=1-123"/>
</dbReference>
<dbReference type="PDB" id="8PKL">
    <property type="method" value="EM"/>
    <property type="resolution" value="3.09 A"/>
    <property type="chains" value="n=1-123"/>
</dbReference>
<dbReference type="PDB" id="8PVA">
    <property type="method" value="EM"/>
    <property type="resolution" value="4.50 A"/>
    <property type="chains" value="j=1-123"/>
</dbReference>
<dbReference type="PDB" id="8Q4F">
    <property type="method" value="EM"/>
    <property type="resolution" value="3.10 A"/>
    <property type="chains" value="j=1-123"/>
</dbReference>
<dbReference type="PDB" id="8QBT">
    <property type="method" value="EM"/>
    <property type="resolution" value="2.20 A"/>
    <property type="chains" value="K=1-123"/>
</dbReference>
<dbReference type="PDB" id="8QK7">
    <property type="method" value="EM"/>
    <property type="resolution" value="2.77 A"/>
    <property type="chains" value="K=1-123"/>
</dbReference>
<dbReference type="PDB" id="8QOA">
    <property type="method" value="EM"/>
    <property type="resolution" value="2.00 A"/>
    <property type="chains" value="j=1-123"/>
</dbReference>
<dbReference type="PDB" id="8R6C">
    <property type="method" value="EM"/>
    <property type="resolution" value="2.20 A"/>
    <property type="chains" value="j=1-123"/>
</dbReference>
<dbReference type="PDB" id="8R8M">
    <property type="method" value="EM"/>
    <property type="resolution" value="2.40 A"/>
    <property type="chains" value="j=1-123"/>
</dbReference>
<dbReference type="PDB" id="8RPY">
    <property type="method" value="EM"/>
    <property type="resolution" value="2.64 A"/>
    <property type="chains" value="K=1-122"/>
</dbReference>
<dbReference type="PDB" id="8RPZ">
    <property type="method" value="EM"/>
    <property type="resolution" value="2.44 A"/>
    <property type="chains" value="K=1-122"/>
</dbReference>
<dbReference type="PDB" id="8RQ0">
    <property type="method" value="EM"/>
    <property type="resolution" value="2.44 A"/>
    <property type="chains" value="K=1-122"/>
</dbReference>
<dbReference type="PDB" id="8RQ2">
    <property type="method" value="EM"/>
    <property type="resolution" value="2.44 A"/>
    <property type="chains" value="K=1-122"/>
</dbReference>
<dbReference type="PDB" id="8SYL">
    <property type="method" value="EM"/>
    <property type="resolution" value="2.90 A"/>
    <property type="chains" value="M=1-123"/>
</dbReference>
<dbReference type="PDB" id="8T5D">
    <property type="method" value="EM"/>
    <property type="resolution" value="3.20 A"/>
    <property type="chains" value="K=2-123"/>
</dbReference>
<dbReference type="PDB" id="8T5H">
    <property type="method" value="EM"/>
    <property type="resolution" value="3.30 A"/>
    <property type="chains" value="K=2-123"/>
</dbReference>
<dbReference type="PDB" id="8VS9">
    <property type="method" value="EM"/>
    <property type="resolution" value="3.90 A"/>
    <property type="chains" value="L14=1-123"/>
</dbReference>
<dbReference type="PDB" id="8VSA">
    <property type="method" value="EM"/>
    <property type="resolution" value="3.70 A"/>
    <property type="chains" value="L14=1-123"/>
</dbReference>
<dbReference type="PDB" id="8W51">
    <property type="method" value="EM"/>
    <property type="resolution" value="2.40 A"/>
    <property type="chains" value="L=1-123"/>
</dbReference>
<dbReference type="PDB" id="8YUO">
    <property type="method" value="EM"/>
    <property type="resolution" value="2.25 A"/>
    <property type="chains" value="j=1-123"/>
</dbReference>
<dbReference type="PDB" id="8YUP">
    <property type="method" value="EM"/>
    <property type="resolution" value="2.39 A"/>
    <property type="chains" value="j=1-123"/>
</dbReference>
<dbReference type="PDB" id="8YUQ">
    <property type="method" value="EM"/>
    <property type="resolution" value="2.41 A"/>
    <property type="chains" value="j=1-123"/>
</dbReference>
<dbReference type="PDB" id="8YUR">
    <property type="method" value="EM"/>
    <property type="resolution" value="2.47 A"/>
    <property type="chains" value="j=1-123"/>
</dbReference>
<dbReference type="PDB" id="8YUS">
    <property type="method" value="EM"/>
    <property type="resolution" value="2.43 A"/>
    <property type="chains" value="j=1-123"/>
</dbReference>
<dbReference type="PDB" id="9D89">
    <property type="method" value="EM"/>
    <property type="resolution" value="1.95 A"/>
    <property type="chains" value="j=1-123"/>
</dbReference>
<dbReference type="PDB" id="9DYG">
    <property type="method" value="EM"/>
    <property type="resolution" value="5.27 A"/>
    <property type="chains" value="K=9-118"/>
</dbReference>
<dbReference type="PDB" id="9FBV">
    <property type="method" value="EM"/>
    <property type="resolution" value="2.40 A"/>
    <property type="chains" value="j=1-123"/>
</dbReference>
<dbReference type="PDB" id="9GFT">
    <property type="method" value="EM"/>
    <property type="resolution" value="3.10 A"/>
    <property type="chains" value="Af/X=1-123"/>
</dbReference>
<dbReference type="PDB" id="9GGR">
    <property type="method" value="EM"/>
    <property type="resolution" value="3.20 A"/>
    <property type="chains" value="Af/X=1-123"/>
</dbReference>
<dbReference type="PDB" id="9GR1">
    <property type="method" value="EM"/>
    <property type="resolution" value="3.17 A"/>
    <property type="chains" value="j=1-123"/>
</dbReference>
<dbReference type="PDB" id="9H3L">
    <property type="method" value="EM"/>
    <property type="resolution" value="5.84 A"/>
    <property type="chains" value="K=1-122"/>
</dbReference>
<dbReference type="PDB" id="9H3M">
    <property type="method" value="EM"/>
    <property type="resolution" value="4.41 A"/>
    <property type="chains" value="K=1-122"/>
</dbReference>
<dbReference type="PDB" id="9H3O">
    <property type="method" value="EM"/>
    <property type="resolution" value="4.54 A"/>
    <property type="chains" value="K=1-122"/>
</dbReference>
<dbReference type="PDB" id="9H3P">
    <property type="method" value="EM"/>
    <property type="resolution" value="7.06 A"/>
    <property type="chains" value="K=1-122"/>
</dbReference>
<dbReference type="PDB" id="9H3R">
    <property type="method" value="EM"/>
    <property type="resolution" value="4.12 A"/>
    <property type="chains" value="K=1-122"/>
</dbReference>
<dbReference type="PDB" id="9H3S">
    <property type="method" value="EM"/>
    <property type="resolution" value="4.16 A"/>
    <property type="chains" value="K=1-122"/>
</dbReference>
<dbReference type="PDB" id="9H3T">
    <property type="method" value="EM"/>
    <property type="resolution" value="3.85 A"/>
    <property type="chains" value="K=1-122"/>
</dbReference>
<dbReference type="PDB" id="9H3U">
    <property type="method" value="EM"/>
    <property type="resolution" value="3.47 A"/>
    <property type="chains" value="K=1-122"/>
</dbReference>
<dbReference type="PDB" id="9H3V">
    <property type="method" value="EM"/>
    <property type="resolution" value="3.55 A"/>
    <property type="chains" value="K=1-122"/>
</dbReference>
<dbReference type="PDB" id="9H3W">
    <property type="method" value="EM"/>
    <property type="resolution" value="5.38 A"/>
    <property type="chains" value="K=1-122"/>
</dbReference>
<dbReference type="PDB" id="9H3X">
    <property type="method" value="EM"/>
    <property type="resolution" value="4.12 A"/>
    <property type="chains" value="K=1-122"/>
</dbReference>
<dbReference type="PDB" id="9H3Y">
    <property type="method" value="EM"/>
    <property type="resolution" value="3.09 A"/>
    <property type="chains" value="K=1-122"/>
</dbReference>
<dbReference type="PDB" id="9H3Z">
    <property type="method" value="EM"/>
    <property type="resolution" value="2.98 A"/>
    <property type="chains" value="K=1-122"/>
</dbReference>
<dbReference type="PDB" id="9HA1">
    <property type="method" value="EM"/>
    <property type="resolution" value="4.17 A"/>
    <property type="chains" value="K=1-122"/>
</dbReference>
<dbReference type="PDB" id="9HA2">
    <property type="method" value="EM"/>
    <property type="resolution" value="4.17 A"/>
    <property type="chains" value="K=1-122"/>
</dbReference>
<dbReference type="PDB" id="9HA4">
    <property type="method" value="EM"/>
    <property type="resolution" value="4.26 A"/>
    <property type="chains" value="K=1-122"/>
</dbReference>
<dbReference type="PDB" id="9HA5">
    <property type="method" value="EM"/>
    <property type="resolution" value="3.30 A"/>
    <property type="chains" value="K=1-122"/>
</dbReference>
<dbReference type="PDB" id="9HA6">
    <property type="method" value="EM"/>
    <property type="resolution" value="3.08 A"/>
    <property type="chains" value="K=1-122"/>
</dbReference>
<dbReference type="PDB" id="9HAI">
    <property type="method" value="EM"/>
    <property type="resolution" value="3.01 A"/>
    <property type="chains" value="K=1-122"/>
</dbReference>
<dbReference type="PDB" id="9HAM">
    <property type="method" value="EM"/>
    <property type="resolution" value="5.06 A"/>
    <property type="chains" value="K=1-122"/>
</dbReference>
<dbReference type="PDB" id="9MOR">
    <property type="method" value="EM"/>
    <property type="resolution" value="2.65 A"/>
    <property type="chains" value="K=1-123"/>
</dbReference>
<dbReference type="PDB" id="9MQ4">
    <property type="method" value="EM"/>
    <property type="resolution" value="2.78 A"/>
    <property type="chains" value="K=1-123"/>
</dbReference>
<dbReference type="PDBsum" id="1ML5"/>
<dbReference type="PDBsum" id="2J28"/>
<dbReference type="PDBsum" id="2RDO"/>
<dbReference type="PDBsum" id="3BBX"/>
<dbReference type="PDBsum" id="3IY9"/>
<dbReference type="PDBsum" id="3IZZ"/>
<dbReference type="PDBsum" id="3J5L"/>
<dbReference type="PDBsum" id="3J7Z"/>
<dbReference type="PDBsum" id="3J8G"/>
<dbReference type="PDBsum" id="3J9Y"/>
<dbReference type="PDBsum" id="3J9Z"/>
<dbReference type="PDBsum" id="3JA1"/>
<dbReference type="PDBsum" id="3JBU"/>
<dbReference type="PDBsum" id="3JBV"/>
<dbReference type="PDBsum" id="3JCD"/>
<dbReference type="PDBsum" id="3JCE"/>
<dbReference type="PDBsum" id="3JCJ"/>
<dbReference type="PDBsum" id="3JCN"/>
<dbReference type="PDBsum" id="487D"/>
<dbReference type="PDBsum" id="4CSU"/>
<dbReference type="PDBsum" id="4U1U"/>
<dbReference type="PDBsum" id="4U1V"/>
<dbReference type="PDBsum" id="4U20"/>
<dbReference type="PDBsum" id="4U24"/>
<dbReference type="PDBsum" id="4U25"/>
<dbReference type="PDBsum" id="4U26"/>
<dbReference type="PDBsum" id="4U27"/>
<dbReference type="PDBsum" id="4UY8"/>
<dbReference type="PDBsum" id="4V47"/>
<dbReference type="PDBsum" id="4V48"/>
<dbReference type="PDBsum" id="4V4H"/>
<dbReference type="PDBsum" id="4V4Q"/>
<dbReference type="PDBsum" id="4V4V"/>
<dbReference type="PDBsum" id="4V4W"/>
<dbReference type="PDBsum" id="4V50"/>
<dbReference type="PDBsum" id="4V52"/>
<dbReference type="PDBsum" id="4V53"/>
<dbReference type="PDBsum" id="4V54"/>
<dbReference type="PDBsum" id="4V55"/>
<dbReference type="PDBsum" id="4V56"/>
<dbReference type="PDBsum" id="4V57"/>
<dbReference type="PDBsum" id="4V5B"/>
<dbReference type="PDBsum" id="4V5H"/>
<dbReference type="PDBsum" id="4V5Y"/>
<dbReference type="PDBsum" id="4V64"/>
<dbReference type="PDBsum" id="4V65"/>
<dbReference type="PDBsum" id="4V66"/>
<dbReference type="PDBsum" id="4V69"/>
<dbReference type="PDBsum" id="4V6C"/>
<dbReference type="PDBsum" id="4V6D"/>
<dbReference type="PDBsum" id="4V6E"/>
<dbReference type="PDBsum" id="4V6K"/>
<dbReference type="PDBsum" id="4V6L"/>
<dbReference type="PDBsum" id="4V6M"/>
<dbReference type="PDBsum" id="4V6N"/>
<dbReference type="PDBsum" id="4V6O"/>
<dbReference type="PDBsum" id="4V6P"/>
<dbReference type="PDBsum" id="4V6Q"/>
<dbReference type="PDBsum" id="4V6R"/>
<dbReference type="PDBsum" id="4V6S"/>
<dbReference type="PDBsum" id="4V6T"/>
<dbReference type="PDBsum" id="4V6V"/>
<dbReference type="PDBsum" id="4V6Y"/>
<dbReference type="PDBsum" id="4V6Z"/>
<dbReference type="PDBsum" id="4V70"/>
<dbReference type="PDBsum" id="4V71"/>
<dbReference type="PDBsum" id="4V72"/>
<dbReference type="PDBsum" id="4V73"/>
<dbReference type="PDBsum" id="4V74"/>
<dbReference type="PDBsum" id="4V75"/>
<dbReference type="PDBsum" id="4V76"/>
<dbReference type="PDBsum" id="4V77"/>
<dbReference type="PDBsum" id="4V78"/>
<dbReference type="PDBsum" id="4V79"/>
<dbReference type="PDBsum" id="4V7A"/>
<dbReference type="PDBsum" id="4V7B"/>
<dbReference type="PDBsum" id="4V7C"/>
<dbReference type="PDBsum" id="4V7D"/>
<dbReference type="PDBsum" id="4V7I"/>
<dbReference type="PDBsum" id="4V7S"/>
<dbReference type="PDBsum" id="4V7T"/>
<dbReference type="PDBsum" id="4V7U"/>
<dbReference type="PDBsum" id="4V7V"/>
<dbReference type="PDBsum" id="4V85"/>
<dbReference type="PDBsum" id="4V89"/>
<dbReference type="PDBsum" id="4V9C"/>
<dbReference type="PDBsum" id="4V9D"/>
<dbReference type="PDBsum" id="4V9O"/>
<dbReference type="PDBsum" id="4V9P"/>
<dbReference type="PDBsum" id="4WF1"/>
<dbReference type="PDBsum" id="4WOI"/>
<dbReference type="PDBsum" id="4WWW"/>
<dbReference type="PDBsum" id="4YBB"/>
<dbReference type="PDBsum" id="5ADY"/>
<dbReference type="PDBsum" id="5AFI"/>
<dbReference type="PDBsum" id="5AKA"/>
<dbReference type="PDBsum" id="5GAD"/>
<dbReference type="PDBsum" id="5GAE"/>
<dbReference type="PDBsum" id="5GAF"/>
<dbReference type="PDBsum" id="5GAG"/>
<dbReference type="PDBsum" id="5GAH"/>
<dbReference type="PDBsum" id="5H5U"/>
<dbReference type="PDBsum" id="5IQR"/>
<dbReference type="PDBsum" id="5IT8"/>
<dbReference type="PDBsum" id="5J5B"/>
<dbReference type="PDBsum" id="5J7L"/>
<dbReference type="PDBsum" id="5J88"/>
<dbReference type="PDBsum" id="5J8A"/>
<dbReference type="PDBsum" id="5J91"/>
<dbReference type="PDBsum" id="5JC9"/>
<dbReference type="PDBsum" id="5JTE"/>
<dbReference type="PDBsum" id="5JU8"/>
<dbReference type="PDBsum" id="5KCR"/>
<dbReference type="PDBsum" id="5KCS"/>
<dbReference type="PDBsum" id="5KPS"/>
<dbReference type="PDBsum" id="5KPV"/>
<dbReference type="PDBsum" id="5KPW"/>
<dbReference type="PDBsum" id="5KPX"/>
<dbReference type="PDBsum" id="5L3P"/>
<dbReference type="PDBsum" id="5LZA"/>
<dbReference type="PDBsum" id="5LZB"/>
<dbReference type="PDBsum" id="5LZC"/>
<dbReference type="PDBsum" id="5LZD"/>
<dbReference type="PDBsum" id="5LZE"/>
<dbReference type="PDBsum" id="5LZF"/>
<dbReference type="PDBsum" id="5MDV"/>
<dbReference type="PDBsum" id="5MDW"/>
<dbReference type="PDBsum" id="5MDY"/>
<dbReference type="PDBsum" id="5MDZ"/>
<dbReference type="PDBsum" id="5MGP"/>
<dbReference type="PDBsum" id="5NCO"/>
<dbReference type="PDBsum" id="5NP6"/>
<dbReference type="PDBsum" id="5NWY"/>
<dbReference type="PDBsum" id="5O2R"/>
<dbReference type="PDBsum" id="5U4I"/>
<dbReference type="PDBsum" id="5U9F"/>
<dbReference type="PDBsum" id="5U9G"/>
<dbReference type="PDBsum" id="5UYK"/>
<dbReference type="PDBsum" id="5UYL"/>
<dbReference type="PDBsum" id="5UYM"/>
<dbReference type="PDBsum" id="5UYN"/>
<dbReference type="PDBsum" id="5UYP"/>
<dbReference type="PDBsum" id="5UYQ"/>
<dbReference type="PDBsum" id="5WDT"/>
<dbReference type="PDBsum" id="5WE4"/>
<dbReference type="PDBsum" id="5WE6"/>
<dbReference type="PDBsum" id="5WF0"/>
<dbReference type="PDBsum" id="5WFK"/>
<dbReference type="PDBsum" id="5WFS"/>
<dbReference type="PDBsum" id="6BU8"/>
<dbReference type="PDBsum" id="6BY1"/>
<dbReference type="PDBsum" id="6C4I"/>
<dbReference type="PDBsum" id="6DNC"/>
<dbReference type="PDBsum" id="6ENF"/>
<dbReference type="PDBsum" id="6ENJ"/>
<dbReference type="PDBsum" id="6ENU"/>
<dbReference type="PDBsum" id="6GBZ"/>
<dbReference type="PDBsum" id="6GC0"/>
<dbReference type="PDBsum" id="6GC4"/>
<dbReference type="PDBsum" id="6GC6"/>
<dbReference type="PDBsum" id="6GC7"/>
<dbReference type="PDBsum" id="6GC8"/>
<dbReference type="PDBsum" id="6GWT"/>
<dbReference type="PDBsum" id="6GXM"/>
<dbReference type="PDBsum" id="6GXN"/>
<dbReference type="PDBsum" id="6GXO"/>
<dbReference type="PDBsum" id="6GXP"/>
<dbReference type="PDBsum" id="6H4N"/>
<dbReference type="PDBsum" id="6H58"/>
<dbReference type="PDBsum" id="6HRM"/>
<dbReference type="PDBsum" id="6I0Y"/>
<dbReference type="PDBsum" id="6I7V"/>
<dbReference type="PDBsum" id="6O9J"/>
<dbReference type="PDBsum" id="6O9K"/>
<dbReference type="PDBsum" id="6OFX"/>
<dbReference type="PDBsum" id="6OG7"/>
<dbReference type="PDBsum" id="6OGF"/>
<dbReference type="PDBsum" id="6OGG"/>
<dbReference type="PDBsum" id="6OGI"/>
<dbReference type="PDBsum" id="6OM6"/>
<dbReference type="PDBsum" id="6ORE"/>
<dbReference type="PDBsum" id="6ORL"/>
<dbReference type="PDBsum" id="6OSK"/>
<dbReference type="PDBsum" id="6OSQ"/>
<dbReference type="PDBsum" id="6OST"/>
<dbReference type="PDBsum" id="6OT3"/>
<dbReference type="PDBsum" id="6OUO"/>
<dbReference type="PDBsum" id="6PJ6"/>
<dbReference type="PDBsum" id="6Q97"/>
<dbReference type="PDBsum" id="6Q98"/>
<dbReference type="PDBsum" id="6Q9A"/>
<dbReference type="PDBsum" id="6QDW"/>
<dbReference type="PDBsum" id="6QUL"/>
<dbReference type="PDBsum" id="6S0K"/>
<dbReference type="PDBsum" id="6SZS"/>
<dbReference type="PDBsum" id="6TBV"/>
<dbReference type="PDBsum" id="6TC3"/>
<dbReference type="PDBsum" id="6U48"/>
<dbReference type="PDBsum" id="6VU3"/>
<dbReference type="PDBsum" id="6VWL"/>
<dbReference type="PDBsum" id="6VWM"/>
<dbReference type="PDBsum" id="6VWN"/>
<dbReference type="PDBsum" id="6VYQ"/>
<dbReference type="PDBsum" id="6VYR"/>
<dbReference type="PDBsum" id="6VYS"/>
<dbReference type="PDBsum" id="6VYT"/>
<dbReference type="PDBsum" id="6VYU"/>
<dbReference type="PDBsum" id="6VYW"/>
<dbReference type="PDBsum" id="6VYX"/>
<dbReference type="PDBsum" id="6VYY"/>
<dbReference type="PDBsum" id="6VYZ"/>
<dbReference type="PDBsum" id="6VZ2"/>
<dbReference type="PDBsum" id="6VZ3"/>
<dbReference type="PDBsum" id="6VZ5"/>
<dbReference type="PDBsum" id="6VZ7"/>
<dbReference type="PDBsum" id="6VZJ"/>
<dbReference type="PDBsum" id="6WD0"/>
<dbReference type="PDBsum" id="6WD1"/>
<dbReference type="PDBsum" id="6WD2"/>
<dbReference type="PDBsum" id="6WD3"/>
<dbReference type="PDBsum" id="6WD4"/>
<dbReference type="PDBsum" id="6WD5"/>
<dbReference type="PDBsum" id="6WD6"/>
<dbReference type="PDBsum" id="6WD7"/>
<dbReference type="PDBsum" id="6WD8"/>
<dbReference type="PDBsum" id="6WD9"/>
<dbReference type="PDBsum" id="6WDA"/>
<dbReference type="PDBsum" id="6WDB"/>
<dbReference type="PDBsum" id="6WDC"/>
<dbReference type="PDBsum" id="6WDD"/>
<dbReference type="PDBsum" id="6WDE"/>
<dbReference type="PDBsum" id="6WDF"/>
<dbReference type="PDBsum" id="6WDG"/>
<dbReference type="PDBsum" id="6WDH"/>
<dbReference type="PDBsum" id="6WDI"/>
<dbReference type="PDBsum" id="6WDJ"/>
<dbReference type="PDBsum" id="6WDK"/>
<dbReference type="PDBsum" id="6WDL"/>
<dbReference type="PDBsum" id="6WDM"/>
<dbReference type="PDBsum" id="6WNT"/>
<dbReference type="PDBsum" id="6WNV"/>
<dbReference type="PDBsum" id="6WNW"/>
<dbReference type="PDBsum" id="6X6T"/>
<dbReference type="PDBsum" id="6X7F"/>
<dbReference type="PDBsum" id="6X7K"/>
<dbReference type="PDBsum" id="6X9Q"/>
<dbReference type="PDBsum" id="6XDQ"/>
<dbReference type="PDBsum" id="6XDR"/>
<dbReference type="PDBsum" id="6XGF"/>
<dbReference type="PDBsum" id="6XII"/>
<dbReference type="PDBsum" id="6XIJ"/>
<dbReference type="PDBsum" id="6XZ7"/>
<dbReference type="PDBsum" id="6XZA"/>
<dbReference type="PDBsum" id="6XZB"/>
<dbReference type="PDBsum" id="6Y69"/>
<dbReference type="PDBsum" id="6YS3"/>
<dbReference type="PDBsum" id="6YSR"/>
<dbReference type="PDBsum" id="6YSS"/>
<dbReference type="PDBsum" id="6YST"/>
<dbReference type="PDBsum" id="6YSU"/>
<dbReference type="PDBsum" id="6ZTJ"/>
<dbReference type="PDBsum" id="6ZTL"/>
<dbReference type="PDBsum" id="6ZTM"/>
<dbReference type="PDBsum" id="6ZTN"/>
<dbReference type="PDBsum" id="6ZTO"/>
<dbReference type="PDBsum" id="6ZTP"/>
<dbReference type="PDBsum" id="6ZU1"/>
<dbReference type="PDBsum" id="7ABZ"/>
<dbReference type="PDBsum" id="7AC7"/>
<dbReference type="PDBsum" id="7ACJ"/>
<dbReference type="PDBsum" id="7ACR"/>
<dbReference type="PDBsum" id="7B5K"/>
<dbReference type="PDBsum" id="7BL2"/>
<dbReference type="PDBsum" id="7BL3"/>
<dbReference type="PDBsum" id="7BL4"/>
<dbReference type="PDBsum" id="7BL5"/>
<dbReference type="PDBsum" id="7BL6"/>
<dbReference type="PDBsum" id="7BV8"/>
<dbReference type="PDBsum" id="7D6Z"/>
<dbReference type="PDBsum" id="7D80"/>
<dbReference type="PDBsum" id="7JSS"/>
<dbReference type="PDBsum" id="7JSW"/>
<dbReference type="PDBsum" id="7JSZ"/>
<dbReference type="PDBsum" id="7JT1"/>
<dbReference type="PDBsum" id="7JT2"/>
<dbReference type="PDBsum" id="7JT3"/>
<dbReference type="PDBsum" id="7K00"/>
<dbReference type="PDBsum" id="7K50"/>
<dbReference type="PDBsum" id="7K51"/>
<dbReference type="PDBsum" id="7K52"/>
<dbReference type="PDBsum" id="7K53"/>
<dbReference type="PDBsum" id="7K54"/>
<dbReference type="PDBsum" id="7K55"/>
<dbReference type="PDBsum" id="7LV0"/>
<dbReference type="PDBsum" id="7LVK"/>
<dbReference type="PDBsum" id="7M5D"/>
<dbReference type="PDBsum" id="7N1P"/>
<dbReference type="PDBsum" id="7N2C"/>
<dbReference type="PDBsum" id="7N2U"/>
<dbReference type="PDBsum" id="7N2V"/>
<dbReference type="PDBsum" id="7N30"/>
<dbReference type="PDBsum" id="7N31"/>
<dbReference type="PDBsum" id="7NBU"/>
<dbReference type="PDBsum" id="7NWT"/>
<dbReference type="PDBsum" id="7NWW"/>
<dbReference type="PDBsum" id="7O19"/>
<dbReference type="PDBsum" id="7O1A"/>
<dbReference type="PDBsum" id="7O1C"/>
<dbReference type="PDBsum" id="7ODE"/>
<dbReference type="PDBsum" id="7OIF"/>
<dbReference type="PDBsum" id="7OIG"/>
<dbReference type="PDBsum" id="7OII"/>
<dbReference type="PDBsum" id="7OIZ"/>
<dbReference type="PDBsum" id="7OJ0"/>
<dbReference type="PDBsum" id="7OT5"/>
<dbReference type="PDBsum" id="7P3K"/>
<dbReference type="PDBsum" id="7PJS"/>
<dbReference type="PDBsum" id="7PJT"/>
<dbReference type="PDBsum" id="7PJU"/>
<dbReference type="PDBsum" id="7PJV"/>
<dbReference type="PDBsum" id="7PJW"/>
<dbReference type="PDBsum" id="7PJX"/>
<dbReference type="PDBsum" id="7PJY"/>
<dbReference type="PDBsum" id="7PJZ"/>
<dbReference type="PDBsum" id="7Q4K"/>
<dbReference type="PDBsum" id="7QG8"/>
<dbReference type="PDBsum" id="7QGH"/>
<dbReference type="PDBsum" id="7QGN"/>
<dbReference type="PDBsum" id="7QGR"/>
<dbReference type="PDBsum" id="7QQ3"/>
<dbReference type="PDBsum" id="7S1G"/>
<dbReference type="PDBsum" id="7S1H"/>
<dbReference type="PDBsum" id="7S1I"/>
<dbReference type="PDBsum" id="7S1J"/>
<dbReference type="PDBsum" id="7S1K"/>
<dbReference type="PDBsum" id="7SA4"/>
<dbReference type="PDBsum" id="7SS9"/>
<dbReference type="PDBsum" id="7SSD"/>
<dbReference type="PDBsum" id="7SSL"/>
<dbReference type="PDBsum" id="7SSN"/>
<dbReference type="PDBsum" id="7SSO"/>
<dbReference type="PDBsum" id="7SSW"/>
<dbReference type="PDBsum" id="7ST2"/>
<dbReference type="PDBsum" id="7ST6"/>
<dbReference type="PDBsum" id="7ST7"/>
<dbReference type="PDBsum" id="7TOS"/>
<dbReference type="PDBsum" id="7UG7"/>
<dbReference type="PDBsum" id="7UPH"/>
<dbReference type="PDBsum" id="7Y7C"/>
<dbReference type="PDBsum" id="7Y7D"/>
<dbReference type="PDBsum" id="7Y7E"/>
<dbReference type="PDBsum" id="7Y7F"/>
<dbReference type="PDBsum" id="7Y7G"/>
<dbReference type="PDBsum" id="7Y7H"/>
<dbReference type="PDBsum" id="7Z20"/>
<dbReference type="PDBsum" id="7ZOD"/>
<dbReference type="PDBsum" id="7ZP8"/>
<dbReference type="PDBsum" id="7ZQ5"/>
<dbReference type="PDBsum" id="7ZQ6"/>
<dbReference type="PDBsum" id="7ZTA"/>
<dbReference type="PDBsum" id="8A3L"/>
<dbReference type="PDBsum" id="8AKN"/>
<dbReference type="PDBsum" id="8AM9"/>
<dbReference type="PDBsum" id="8ANA"/>
<dbReference type="PDBsum" id="8AP4"/>
<dbReference type="PDBsum" id="8AYE"/>
<dbReference type="PDBsum" id="8B0X"/>
<dbReference type="PDBsum" id="8B7Y"/>
<dbReference type="PDBsum" id="8BF7"/>
<dbReference type="PDBsum" id="8BGE"/>
<dbReference type="PDBsum" id="8BGH"/>
<dbReference type="PDBsum" id="8BH4"/>
<dbReference type="PDBsum" id="8BHJ"/>
<dbReference type="PDBsum" id="8BHL"/>
<dbReference type="PDBsum" id="8BHN"/>
<dbReference type="PDBsum" id="8BHP"/>
<dbReference type="PDBsum" id="8BIL"/>
<dbReference type="PDBsum" id="8BIM"/>
<dbReference type="PDBsum" id="8C8X"/>
<dbReference type="PDBsum" id="8C8Y"/>
<dbReference type="PDBsum" id="8C8Z"/>
<dbReference type="PDBsum" id="8C90"/>
<dbReference type="PDBsum" id="8C91"/>
<dbReference type="PDBsum" id="8C92"/>
<dbReference type="PDBsum" id="8C93"/>
<dbReference type="PDBsum" id="8C94"/>
<dbReference type="PDBsum" id="8C96"/>
<dbReference type="PDBsum" id="8C97"/>
<dbReference type="PDBsum" id="8CAM"/>
<dbReference type="PDBsum" id="8CEU"/>
<dbReference type="PDBsum" id="8CGD"/>
<dbReference type="PDBsum" id="8CGK"/>
<dbReference type="PDBsum" id="8CGV"/>
<dbReference type="PDBsum" id="8EIU"/>
<dbReference type="PDBsum" id="8EKC"/>
<dbReference type="PDBsum" id="8EMM"/>
<dbReference type="PDBsum" id="8FIZ"/>
<dbReference type="PDBsum" id="8FTO"/>
<dbReference type="PDBsum" id="8FZD"/>
<dbReference type="PDBsum" id="8FZE"/>
<dbReference type="PDBsum" id="8FZF"/>
<dbReference type="PDBsum" id="8FZG"/>
<dbReference type="PDBsum" id="8FZH"/>
<dbReference type="PDBsum" id="8FZI"/>
<dbReference type="PDBsum" id="8FZJ"/>
<dbReference type="PDBsum" id="8G2U"/>
<dbReference type="PDBsum" id="8G31"/>
<dbReference type="PDBsum" id="8G34"/>
<dbReference type="PDBsum" id="8G38"/>
<dbReference type="PDBsum" id="8G6W"/>
<dbReference type="PDBsum" id="8G6X"/>
<dbReference type="PDBsum" id="8G6Y"/>
<dbReference type="PDBsum" id="8G7P"/>
<dbReference type="PDBsum" id="8G7Q"/>
<dbReference type="PDBsum" id="8G7R"/>
<dbReference type="PDBsum" id="8G7S"/>
<dbReference type="PDBsum" id="8HSP"/>
<dbReference type="PDBsum" id="8HTZ"/>
<dbReference type="PDBsum" id="8HU1"/>
<dbReference type="PDBsum" id="8IFB"/>
<dbReference type="PDBsum" id="8IFC"/>
<dbReference type="PDBsum" id="8J1Z"/>
<dbReference type="PDBsum" id="8KIE"/>
<dbReference type="PDBsum" id="8P16"/>
<dbReference type="PDBsum" id="8P17"/>
<dbReference type="PDBsum" id="8P18"/>
<dbReference type="PDBsum" id="8PEG"/>
<dbReference type="PDBsum" id="8PHJ"/>
<dbReference type="PDBsum" id="8PKL"/>
<dbReference type="PDBsum" id="8PVA"/>
<dbReference type="PDBsum" id="8Q4F"/>
<dbReference type="PDBsum" id="8QBT"/>
<dbReference type="PDBsum" id="8QK7"/>
<dbReference type="PDBsum" id="8QOA"/>
<dbReference type="PDBsum" id="8R6C"/>
<dbReference type="PDBsum" id="8R8M"/>
<dbReference type="PDBsum" id="8RPY"/>
<dbReference type="PDBsum" id="8RPZ"/>
<dbReference type="PDBsum" id="8RQ0"/>
<dbReference type="PDBsum" id="8RQ2"/>
<dbReference type="PDBsum" id="8SYL"/>
<dbReference type="PDBsum" id="8T5D"/>
<dbReference type="PDBsum" id="8T5H"/>
<dbReference type="PDBsum" id="8VS9"/>
<dbReference type="PDBsum" id="8VSA"/>
<dbReference type="PDBsum" id="8W51"/>
<dbReference type="PDBsum" id="8YUO"/>
<dbReference type="PDBsum" id="8YUP"/>
<dbReference type="PDBsum" id="8YUQ"/>
<dbReference type="PDBsum" id="8YUR"/>
<dbReference type="PDBsum" id="8YUS"/>
<dbReference type="PDBsum" id="9D89"/>
<dbReference type="PDBsum" id="9DYG"/>
<dbReference type="PDBsum" id="9FBV"/>
<dbReference type="PDBsum" id="9GFT"/>
<dbReference type="PDBsum" id="9GGR"/>
<dbReference type="PDBsum" id="9GR1"/>
<dbReference type="PDBsum" id="9H3L"/>
<dbReference type="PDBsum" id="9H3M"/>
<dbReference type="PDBsum" id="9H3O"/>
<dbReference type="PDBsum" id="9H3P"/>
<dbReference type="PDBsum" id="9H3R"/>
<dbReference type="PDBsum" id="9H3S"/>
<dbReference type="PDBsum" id="9H3T"/>
<dbReference type="PDBsum" id="9H3U"/>
<dbReference type="PDBsum" id="9H3V"/>
<dbReference type="PDBsum" id="9H3W"/>
<dbReference type="PDBsum" id="9H3X"/>
<dbReference type="PDBsum" id="9H3Y"/>
<dbReference type="PDBsum" id="9H3Z"/>
<dbReference type="PDBsum" id="9HA1"/>
<dbReference type="PDBsum" id="9HA2"/>
<dbReference type="PDBsum" id="9HA4"/>
<dbReference type="PDBsum" id="9HA5"/>
<dbReference type="PDBsum" id="9HA6"/>
<dbReference type="PDBsum" id="9HAI"/>
<dbReference type="PDBsum" id="9HAM"/>
<dbReference type="PDBsum" id="9MOR"/>
<dbReference type="PDBsum" id="9MQ4"/>
<dbReference type="EMDB" id="EMD-0076"/>
<dbReference type="EMDB" id="EMD-0080"/>
<dbReference type="EMDB" id="EMD-0081"/>
<dbReference type="EMDB" id="EMD-0082"/>
<dbReference type="EMDB" id="EMD-0083"/>
<dbReference type="EMDB" id="EMD-0137"/>
<dbReference type="EMDB" id="EMD-0139"/>
<dbReference type="EMDB" id="EMD-0261"/>
<dbReference type="EMDB" id="EMD-0322"/>
<dbReference type="EMDB" id="EMD-10073"/>
<dbReference type="EMDB" id="EMD-10353"/>
<dbReference type="EMDB" id="EMD-10453"/>
<dbReference type="EMDB" id="EMD-10458"/>
<dbReference type="EMDB" id="EMD-10655"/>
<dbReference type="EMDB" id="EMD-10656"/>
<dbReference type="EMDB" id="EMD-10657"/>
<dbReference type="EMDB" id="EMD-10705"/>
<dbReference type="EMDB" id="EMD-10905"/>
<dbReference type="EMDB" id="EMD-10906"/>
<dbReference type="EMDB" id="EMD-10907"/>
<dbReference type="EMDB" id="EMD-10908"/>
<dbReference type="EMDB" id="EMD-11418"/>
<dbReference type="EMDB" id="EMD-11419"/>
<dbReference type="EMDB" id="EMD-11420"/>
<dbReference type="EMDB" id="EMD-11421"/>
<dbReference type="EMDB" id="EMD-11422"/>
<dbReference type="EMDB" id="EMD-11423"/>
<dbReference type="EMDB" id="EMD-11426"/>
<dbReference type="EMDB" id="EMD-11710"/>
<dbReference type="EMDB" id="EMD-11713"/>
<dbReference type="EMDB" id="EMD-11717"/>
<dbReference type="EMDB" id="EMD-11718"/>
<dbReference type="EMDB" id="EMD-12035"/>
<dbReference type="EMDB" id="EMD-12215"/>
<dbReference type="EMDB" id="EMD-12216"/>
<dbReference type="EMDB" id="EMD-12217"/>
<dbReference type="EMDB" id="EMD-12218"/>
<dbReference type="EMDB" id="EMD-12219"/>
<dbReference type="EMDB" id="EMD-12261"/>
<dbReference type="EMDB" id="EMD-12635"/>
<dbReference type="EMDB" id="EMD-12636"/>
<dbReference type="EMDB" id="EMD-12693"/>
<dbReference type="EMDB" id="EMD-12694"/>
<dbReference type="EMDB" id="EMD-12695"/>
<dbReference type="EMDB" id="EMD-12826"/>
<dbReference type="EMDB" id="EMD-12928"/>
<dbReference type="EMDB" id="EMD-12929"/>
<dbReference type="EMDB" id="EMD-12930"/>
<dbReference type="EMDB" id="EMD-12936"/>
<dbReference type="EMDB" id="EMD-12937"/>
<dbReference type="EMDB" id="EMD-13055"/>
<dbReference type="EMDB" id="EMD-13180"/>
<dbReference type="EMDB" id="EMD-13458"/>
<dbReference type="EMDB" id="EMD-13459"/>
<dbReference type="EMDB" id="EMD-13461"/>
<dbReference type="EMDB" id="EMD-13462"/>
<dbReference type="EMDB" id="EMD-13463"/>
<dbReference type="EMDB" id="EMD-13464"/>
<dbReference type="EMDB" id="EMD-13465"/>
<dbReference type="EMDB" id="EMD-13805"/>
<dbReference type="EMDB" id="EMD-13952"/>
<dbReference type="EMDB" id="EMD-13955"/>
<dbReference type="EMDB" id="EMD-13956"/>
<dbReference type="EMDB" id="EMD-13958"/>
<dbReference type="EMDB" id="EMD-14121"/>
<dbReference type="EMDB" id="EMD-14454"/>
<dbReference type="EMDB" id="EMD-14846"/>
<dbReference type="EMDB" id="EMD-14850"/>
<dbReference type="EMDB" id="EMD-14864"/>
<dbReference type="EMDB" id="EMD-14865"/>
<dbReference type="EMDB" id="EMD-14956"/>
<dbReference type="EMDB" id="EMD-15116"/>
<dbReference type="EMDB" id="EMD-15558"/>
<dbReference type="EMDB" id="EMD-15712"/>
<dbReference type="EMDB" id="EMD-15793"/>
<dbReference type="EMDB" id="EMD-15905"/>
<dbReference type="EMDB" id="EMD-16015"/>
<dbReference type="EMDB" id="EMD-16029"/>
<dbReference type="EMDB" id="EMD-16031"/>
<dbReference type="EMDB" id="EMD-16047"/>
<dbReference type="EMDB" id="EMD-16057"/>
<dbReference type="EMDB" id="EMD-16059"/>
<dbReference type="EMDB" id="EMD-16062"/>
<dbReference type="EMDB" id="EMD-16065"/>
<dbReference type="EMDB" id="EMD-16081"/>
<dbReference type="EMDB" id="EMD-16082"/>
<dbReference type="EMDB" id="EMD-16494"/>
<dbReference type="EMDB" id="EMD-16495"/>
<dbReference type="EMDB" id="EMD-16496"/>
<dbReference type="EMDB" id="EMD-16497"/>
<dbReference type="EMDB" id="EMD-16498"/>
<dbReference type="EMDB" id="EMD-16499"/>
<dbReference type="EMDB" id="EMD-16500"/>
<dbReference type="EMDB" id="EMD-16501"/>
<dbReference type="EMDB" id="EMD-16503"/>
<dbReference type="EMDB" id="EMD-16504"/>
<dbReference type="EMDB" id="EMD-16530"/>
<dbReference type="EMDB" id="EMD-16613"/>
<dbReference type="EMDB" id="EMD-16641"/>
<dbReference type="EMDB" id="EMD-16646"/>
<dbReference type="EMDB" id="EMD-16652"/>
<dbReference type="EMDB" id="EMD-17346"/>
<dbReference type="EMDB" id="EMD-17347"/>
<dbReference type="EMDB" id="EMD-17348"/>
<dbReference type="EMDB" id="EMD-17631"/>
<dbReference type="EMDB" id="EMD-17667"/>
<dbReference type="EMDB" id="EMD-17743"/>
<dbReference type="EMDB" id="EMD-17959"/>
<dbReference type="EMDB" id="EMD-18145"/>
<dbReference type="EMDB" id="EMD-18320"/>
<dbReference type="EMDB" id="EMD-18458"/>
<dbReference type="EMDB" id="EMD-18534"/>
<dbReference type="EMDB" id="EMD-18950"/>
<dbReference type="EMDB" id="EMD-19004"/>
<dbReference type="EMDB" id="EMD-19426"/>
<dbReference type="EMDB" id="EMD-19427"/>
<dbReference type="EMDB" id="EMD-19428"/>
<dbReference type="EMDB" id="EMD-19429"/>
<dbReference type="EMDB" id="EMD-20048"/>
<dbReference type="EMDB" id="EMD-20052"/>
<dbReference type="EMDB" id="EMD-21420"/>
<dbReference type="EMDB" id="EMD-21421"/>
<dbReference type="EMDB" id="EMD-21422"/>
<dbReference type="EMDB" id="EMD-21620"/>
<dbReference type="EMDB" id="EMD-21625"/>
<dbReference type="EMDB" id="EMD-21630"/>
<dbReference type="EMDB" id="EMD-21631"/>
<dbReference type="EMDB" id="EMD-21632"/>
<dbReference type="EMDB" id="EMD-21633"/>
<dbReference type="EMDB" id="EMD-21634"/>
<dbReference type="EMDB" id="EMD-21635"/>
<dbReference type="EMDB" id="EMD-21636"/>
<dbReference type="EMDB" id="EMD-21637"/>
<dbReference type="EMDB" id="EMD-21638"/>
<dbReference type="EMDB" id="EMD-21639"/>
<dbReference type="EMDB" id="EMD-21640"/>
<dbReference type="EMDB" id="EMD-21641"/>
<dbReference type="EMDB" id="EMD-21856"/>
<dbReference type="EMDB" id="EMD-21857"/>
<dbReference type="EMDB" id="EMD-21858"/>
<dbReference type="EMDB" id="EMD-22459"/>
<dbReference type="EMDB" id="EMD-22461"/>
<dbReference type="EMDB" id="EMD-22464"/>
<dbReference type="EMDB" id="EMD-22466"/>
<dbReference type="EMDB" id="EMD-22469"/>
<dbReference type="EMDB" id="EMD-22472"/>
<dbReference type="EMDB" id="EMD-22669"/>
<dbReference type="EMDB" id="EMD-22670"/>
<dbReference type="EMDB" id="EMD-22671"/>
<dbReference type="EMDB" id="EMD-22672"/>
<dbReference type="EMDB" id="EMD-22673"/>
<dbReference type="EMDB" id="EMD-22674"/>
<dbReference type="EMDB" id="EMD-23528"/>
<dbReference type="EMDB" id="EMD-24120"/>
<dbReference type="EMDB" id="EMD-24132"/>
<dbReference type="EMDB" id="EMD-24133"/>
<dbReference type="EMDB" id="EMD-24134"/>
<dbReference type="EMDB" id="EMD-24135"/>
<dbReference type="EMDB" id="EMD-24136"/>
<dbReference type="EMDB" id="EMD-24803"/>
<dbReference type="EMDB" id="EMD-25405"/>
<dbReference type="EMDB" id="EMD-25407"/>
<dbReference type="EMDB" id="EMD-25409"/>
<dbReference type="EMDB" id="EMD-25410"/>
<dbReference type="EMDB" id="EMD-25411"/>
<dbReference type="EMDB" id="EMD-25415"/>
<dbReference type="EMDB" id="EMD-25418"/>
<dbReference type="EMDB" id="EMD-25420"/>
<dbReference type="EMDB" id="EMD-25421"/>
<dbReference type="EMDB" id="EMD-30215"/>
<dbReference type="EMDB" id="EMD-30598"/>
<dbReference type="EMDB" id="EMD-30611"/>
<dbReference type="EMDB" id="EMD-33660"/>
<dbReference type="EMDB" id="EMD-33661"/>
<dbReference type="EMDB" id="EMD-33662"/>
<dbReference type="EMDB" id="EMD-33663"/>
<dbReference type="EMDB" id="EMD-33664"/>
<dbReference type="EMDB" id="EMD-33665"/>
<dbReference type="EMDB" id="EMD-3489"/>
<dbReference type="EMDB" id="EMD-3490"/>
<dbReference type="EMDB" id="EMD-3492"/>
<dbReference type="EMDB" id="EMD-3493"/>
<dbReference type="EMDB" id="EMD-35001"/>
<dbReference type="EMDB" id="EMD-35020"/>
<dbReference type="EMDB" id="EMD-35022"/>
<dbReference type="EMDB" id="EMD-3508"/>
<dbReference type="EMDB" id="EMD-35411"/>
<dbReference type="EMDB" id="EMD-35412"/>
<dbReference type="EMDB" id="EMD-35939"/>
<dbReference type="EMDB" id="EMD-3617"/>
<dbReference type="EMDB" id="EMD-3713"/>
<dbReference type="EMDB" id="EMD-37258"/>
<dbReference type="EMDB" id="EMD-37271"/>
<dbReference type="EMDB" id="EMD-3730"/>
<dbReference type="EMDB" id="EMD-3898"/>
<dbReference type="EMDB" id="EMD-3899"/>
<dbReference type="EMDB" id="EMD-3903"/>
<dbReference type="EMDB" id="EMD-39577"/>
<dbReference type="EMDB" id="EMD-39578"/>
<dbReference type="EMDB" id="EMD-39579"/>
<dbReference type="EMDB" id="EMD-39580"/>
<dbReference type="EMDB" id="EMD-39581"/>
<dbReference type="EMDB" id="EMD-4001"/>
<dbReference type="EMDB" id="EMD-4121"/>
<dbReference type="EMDB" id="EMD-4122"/>
<dbReference type="EMDB" id="EMD-4123"/>
<dbReference type="EMDB" id="EMD-4124"/>
<dbReference type="EMDB" id="EMD-4125"/>
<dbReference type="EMDB" id="EMD-4126"/>
<dbReference type="EMDB" id="EMD-4378"/>
<dbReference type="EMDB" id="EMD-4379"/>
<dbReference type="EMDB" id="EMD-4380"/>
<dbReference type="EMDB" id="EMD-4381"/>
<dbReference type="EMDB" id="EMD-4382"/>
<dbReference type="EMDB" id="EMD-4383"/>
<dbReference type="EMDB" id="EMD-4476"/>
<dbReference type="EMDB" id="EMD-4477"/>
<dbReference type="EMDB" id="EMD-4478"/>
<dbReference type="EMDB" id="EMD-4638"/>
<dbReference type="EMDB" id="EMD-47303"/>
<dbReference type="EMDB" id="EMD-48479"/>
<dbReference type="EMDB" id="EMD-48513"/>
<dbReference type="EMDB" id="EMD-50296"/>
<dbReference type="EMDB" id="EMD-51318"/>
<dbReference type="EMDB" id="EMD-51340"/>
<dbReference type="EMDB" id="EMD-51829"/>
<dbReference type="EMDB" id="EMD-51830"/>
<dbReference type="EMDB" id="EMD-51832"/>
<dbReference type="EMDB" id="EMD-51833"/>
<dbReference type="EMDB" id="EMD-51835"/>
<dbReference type="EMDB" id="EMD-51836"/>
<dbReference type="EMDB" id="EMD-51837"/>
<dbReference type="EMDB" id="EMD-51838"/>
<dbReference type="EMDB" id="EMD-51839"/>
<dbReference type="EMDB" id="EMD-51840"/>
<dbReference type="EMDB" id="EMD-51841"/>
<dbReference type="EMDB" id="EMD-51842"/>
<dbReference type="EMDB" id="EMD-51843"/>
<dbReference type="EMDB" id="EMD-51973"/>
<dbReference type="EMDB" id="EMD-51974"/>
<dbReference type="EMDB" id="EMD-51976"/>
<dbReference type="EMDB" id="EMD-51977"/>
<dbReference type="EMDB" id="EMD-51978"/>
<dbReference type="EMDB" id="EMD-51981"/>
<dbReference type="EMDB" id="EMD-51983"/>
<dbReference type="EMDB" id="EMD-6667"/>
<dbReference type="EMDB" id="EMD-7289"/>
<dbReference type="EMDB" id="EMD-7341"/>
<dbReference type="EMDB" id="EMD-8000"/>
<dbReference type="EMDB" id="EMD-8001"/>
<dbReference type="EMDB" id="EMD-8002"/>
<dbReference type="EMDB" id="EMD-8003"/>
<dbReference type="EMDB" id="EMD-8004"/>
<dbReference type="EMDB" id="EMD-8107"/>
<dbReference type="EMDB" id="EMD-8175"/>
<dbReference type="EMDB" id="EMD-8176"/>
<dbReference type="EMDB" id="EMD-8237"/>
<dbReference type="EMDB" id="EMD-8238"/>
<dbReference type="EMDB" id="EMD-8279"/>
<dbReference type="EMDB" id="EMD-8280"/>
<dbReference type="EMDB" id="EMD-8281"/>
<dbReference type="EMDB" id="EMD-8282"/>
<dbReference type="EMDB" id="EMD-8505"/>
<dbReference type="EMDB" id="EMD-8615"/>
<dbReference type="EMDB" id="EMD-8616"/>
<dbReference type="EMDB" id="EMD-8617"/>
<dbReference type="EMDB" id="EMD-8618"/>
<dbReference type="EMDB" id="EMD-8619"/>
<dbReference type="EMDB" id="EMD-8620"/>
<dbReference type="EMDB" id="EMD-8813"/>
<dbReference type="EMDB" id="EMD-8814"/>
<dbReference type="EMDB" id="EMD-8828"/>
<dbReference type="SMR" id="P0ADY3"/>
<dbReference type="BioGRID" id="4263386">
    <property type="interactions" value="36"/>
</dbReference>
<dbReference type="BioGRID" id="852121">
    <property type="interactions" value="2"/>
</dbReference>
<dbReference type="ComplexPortal" id="CPX-3807">
    <property type="entry name" value="50S large ribosomal subunit"/>
</dbReference>
<dbReference type="DIP" id="DIP-35798N"/>
<dbReference type="FunCoup" id="P0ADY3">
    <property type="interactions" value="1033"/>
</dbReference>
<dbReference type="IntAct" id="P0ADY3">
    <property type="interactions" value="64"/>
</dbReference>
<dbReference type="STRING" id="511145.b3310"/>
<dbReference type="MoonProt" id="P0ADY3"/>
<dbReference type="jPOST" id="P0ADY3"/>
<dbReference type="PaxDb" id="511145-b3310"/>
<dbReference type="EnsemblBacteria" id="AAC76335">
    <property type="protein sequence ID" value="AAC76335"/>
    <property type="gene ID" value="b3310"/>
</dbReference>
<dbReference type="GeneID" id="93778677"/>
<dbReference type="GeneID" id="947809"/>
<dbReference type="KEGG" id="ecj:JW3272"/>
<dbReference type="KEGG" id="eco:b3310"/>
<dbReference type="KEGG" id="ecoc:C3026_17990"/>
<dbReference type="PATRIC" id="fig|1411691.4.peg.3421"/>
<dbReference type="EchoBASE" id="EB0868"/>
<dbReference type="eggNOG" id="COG0093">
    <property type="taxonomic scope" value="Bacteria"/>
</dbReference>
<dbReference type="HOGENOM" id="CLU_095071_2_1_6"/>
<dbReference type="InParanoid" id="P0ADY3"/>
<dbReference type="OMA" id="MIQMQTR"/>
<dbReference type="OrthoDB" id="9806379at2"/>
<dbReference type="PhylomeDB" id="P0ADY3"/>
<dbReference type="BioCyc" id="EcoCyc:EG10875-MONOMER"/>
<dbReference type="BioCyc" id="MetaCyc:EG10875-MONOMER"/>
<dbReference type="EvolutionaryTrace" id="P0ADY3"/>
<dbReference type="PRO" id="PR:P0ADY3"/>
<dbReference type="Proteomes" id="UP000000625">
    <property type="component" value="Chromosome"/>
</dbReference>
<dbReference type="GO" id="GO:0005737">
    <property type="term" value="C:cytoplasm"/>
    <property type="evidence" value="ECO:0000314"/>
    <property type="project" value="ComplexPortal"/>
</dbReference>
<dbReference type="GO" id="GO:0005829">
    <property type="term" value="C:cytosol"/>
    <property type="evidence" value="ECO:0000314"/>
    <property type="project" value="EcoCyc"/>
</dbReference>
<dbReference type="GO" id="GO:0022625">
    <property type="term" value="C:cytosolic large ribosomal subunit"/>
    <property type="evidence" value="ECO:0000314"/>
    <property type="project" value="EcoCyc"/>
</dbReference>
<dbReference type="GO" id="GO:0070180">
    <property type="term" value="F:large ribosomal subunit rRNA binding"/>
    <property type="evidence" value="ECO:0000314"/>
    <property type="project" value="EcoCyc"/>
</dbReference>
<dbReference type="GO" id="GO:0003735">
    <property type="term" value="F:structural constituent of ribosome"/>
    <property type="evidence" value="ECO:0000318"/>
    <property type="project" value="GO_Central"/>
</dbReference>
<dbReference type="GO" id="GO:0002181">
    <property type="term" value="P:cytoplasmic translation"/>
    <property type="evidence" value="ECO:0000303"/>
    <property type="project" value="ComplexPortal"/>
</dbReference>
<dbReference type="CDD" id="cd00337">
    <property type="entry name" value="Ribosomal_uL14"/>
    <property type="match status" value="1"/>
</dbReference>
<dbReference type="FunFam" id="2.40.150.20:FF:000001">
    <property type="entry name" value="50S ribosomal protein L14"/>
    <property type="match status" value="1"/>
</dbReference>
<dbReference type="Gene3D" id="2.40.150.20">
    <property type="entry name" value="Ribosomal protein L14"/>
    <property type="match status" value="1"/>
</dbReference>
<dbReference type="HAMAP" id="MF_01367">
    <property type="entry name" value="Ribosomal_uL14"/>
    <property type="match status" value="1"/>
</dbReference>
<dbReference type="InterPro" id="IPR000218">
    <property type="entry name" value="Ribosomal_uL14"/>
</dbReference>
<dbReference type="InterPro" id="IPR005745">
    <property type="entry name" value="Ribosomal_uL14_bac-type"/>
</dbReference>
<dbReference type="InterPro" id="IPR019972">
    <property type="entry name" value="Ribosomal_uL14_CS"/>
</dbReference>
<dbReference type="InterPro" id="IPR036853">
    <property type="entry name" value="Ribosomal_uL14_sf"/>
</dbReference>
<dbReference type="NCBIfam" id="TIGR01067">
    <property type="entry name" value="rplN_bact"/>
    <property type="match status" value="1"/>
</dbReference>
<dbReference type="PANTHER" id="PTHR11761">
    <property type="entry name" value="50S/60S RIBOSOMAL PROTEIN L14/L23"/>
    <property type="match status" value="1"/>
</dbReference>
<dbReference type="PANTHER" id="PTHR11761:SF3">
    <property type="entry name" value="LARGE RIBOSOMAL SUBUNIT PROTEIN UL14M"/>
    <property type="match status" value="1"/>
</dbReference>
<dbReference type="Pfam" id="PF00238">
    <property type="entry name" value="Ribosomal_L14"/>
    <property type="match status" value="1"/>
</dbReference>
<dbReference type="SMART" id="SM01374">
    <property type="entry name" value="Ribosomal_L14"/>
    <property type="match status" value="1"/>
</dbReference>
<dbReference type="SUPFAM" id="SSF50193">
    <property type="entry name" value="Ribosomal protein L14"/>
    <property type="match status" value="1"/>
</dbReference>
<dbReference type="PROSITE" id="PS00049">
    <property type="entry name" value="RIBOSOMAL_L14"/>
    <property type="match status" value="1"/>
</dbReference>
<feature type="chain" id="PRO_0000128540" description="Large ribosomal subunit protein uL14">
    <location>
        <begin position="1"/>
        <end position="123"/>
    </location>
</feature>
<feature type="mutagenesis site" description="Reduced RsfS binding." evidence="7">
    <original>T</original>
    <variation>A</variation>
    <location>
        <position position="97"/>
    </location>
</feature>
<feature type="mutagenesis site" description="Reduced RsfS binding." evidence="7">
    <original>R</original>
    <variation>A</variation>
    <location>
        <position position="98"/>
    </location>
</feature>
<feature type="mutagenesis site" description="Reduced RsfS binding." evidence="7">
    <original>K</original>
    <variation>A</variation>
    <location>
        <position position="114"/>
    </location>
</feature>
<feature type="mutagenesis site" description="No change in RsfS binding." evidence="7">
    <original>S</original>
    <variation>A</variation>
    <location>
        <position position="117"/>
    </location>
</feature>
<feature type="sequence conflict" description="In Ref. 1; AA sequence." evidence="17" ref="1">
    <location>
        <position position="63"/>
    </location>
</feature>
<feature type="sequence conflict" description="In Ref. 1; AA sequence." evidence="17" ref="1">
    <original>C</original>
    <variation>S</variation>
    <location>
        <position position="84"/>
    </location>
</feature>
<feature type="sequence conflict" description="In Ref. 1; AA sequence." evidence="17" ref="1">
    <original>NS</original>
    <variation>TD</variation>
    <location>
        <begin position="90"/>
        <end position="91"/>
    </location>
</feature>
<feature type="sequence conflict" description="In Ref. 1; AA sequence." evidence="17" ref="1">
    <location>
        <position position="97"/>
    </location>
</feature>
<feature type="sequence conflict" description="In Ref. 1; AA sequence." evidence="17" ref="1">
    <original>I</original>
    <variation>L</variation>
    <location>
        <position position="115"/>
    </location>
</feature>
<feature type="sequence conflict" description="In Ref. 1; AA sequence." evidence="17" ref="1">
    <location>
        <position position="123"/>
    </location>
</feature>
<feature type="strand" evidence="26">
    <location>
        <begin position="7"/>
        <end position="10"/>
    </location>
</feature>
<feature type="strand" evidence="26">
    <location>
        <begin position="12"/>
        <end position="24"/>
    </location>
</feature>
<feature type="strand" evidence="24">
    <location>
        <begin position="26"/>
        <end position="29"/>
    </location>
</feature>
<feature type="strand" evidence="26">
    <location>
        <begin position="38"/>
        <end position="46"/>
    </location>
</feature>
<feature type="strand" evidence="26">
    <location>
        <begin position="50"/>
        <end position="52"/>
    </location>
</feature>
<feature type="strand" evidence="26">
    <location>
        <begin position="57"/>
        <end position="64"/>
    </location>
</feature>
<feature type="strand" evidence="23">
    <location>
        <begin position="72"/>
        <end position="74"/>
    </location>
</feature>
<feature type="strand" evidence="26">
    <location>
        <begin position="76"/>
        <end position="81"/>
    </location>
</feature>
<feature type="strand" evidence="26">
    <location>
        <begin position="83"/>
        <end position="87"/>
    </location>
</feature>
<feature type="turn" evidence="26">
    <location>
        <begin position="89"/>
        <end position="91"/>
    </location>
</feature>
<feature type="strand" evidence="25">
    <location>
        <begin position="94"/>
        <end position="97"/>
    </location>
</feature>
<feature type="strand" evidence="22">
    <location>
        <begin position="101"/>
        <end position="103"/>
    </location>
</feature>
<feature type="helix" evidence="26">
    <location>
        <begin position="105"/>
        <end position="107"/>
    </location>
</feature>
<feature type="helix" evidence="27">
    <location>
        <begin position="110"/>
        <end position="112"/>
    </location>
</feature>
<feature type="helix" evidence="26">
    <location>
        <begin position="113"/>
        <end position="118"/>
    </location>
</feature>
<feature type="strand" evidence="22">
    <location>
        <begin position="120"/>
        <end position="122"/>
    </location>
</feature>